<evidence type="ECO:0000250" key="1">
    <source>
        <dbReference type="UniProtKB" id="P63038"/>
    </source>
</evidence>
<evidence type="ECO:0000269" key="2">
    <source>
    </source>
</evidence>
<evidence type="ECO:0000269" key="3">
    <source>
    </source>
</evidence>
<evidence type="ECO:0000269" key="4">
    <source>
    </source>
</evidence>
<evidence type="ECO:0000269" key="5">
    <source>
    </source>
</evidence>
<evidence type="ECO:0000269" key="6">
    <source>
    </source>
</evidence>
<evidence type="ECO:0000269" key="7">
    <source>
    </source>
</evidence>
<evidence type="ECO:0000269" key="8">
    <source>
    </source>
</evidence>
<evidence type="ECO:0000269" key="9">
    <source>
    </source>
</evidence>
<evidence type="ECO:0000269" key="10">
    <source>
    </source>
</evidence>
<evidence type="ECO:0000269" key="11">
    <source>
    </source>
</evidence>
<evidence type="ECO:0000269" key="12">
    <source>
    </source>
</evidence>
<evidence type="ECO:0000269" key="13">
    <source>
    </source>
</evidence>
<evidence type="ECO:0000269" key="14">
    <source>
    </source>
</evidence>
<evidence type="ECO:0000269" key="15">
    <source>
    </source>
</evidence>
<evidence type="ECO:0000269" key="16">
    <source>
    </source>
</evidence>
<evidence type="ECO:0000269" key="17">
    <source>
    </source>
</evidence>
<evidence type="ECO:0000269" key="18">
    <source>
    </source>
</evidence>
<evidence type="ECO:0000303" key="19">
    <source>
    </source>
</evidence>
<evidence type="ECO:0000305" key="20"/>
<evidence type="ECO:0000305" key="21">
    <source>
    </source>
</evidence>
<evidence type="ECO:0007744" key="22">
    <source>
        <dbReference type="PDB" id="4PJ1"/>
    </source>
</evidence>
<evidence type="ECO:0007744" key="23">
    <source>
    </source>
</evidence>
<evidence type="ECO:0007744" key="24">
    <source>
    </source>
</evidence>
<evidence type="ECO:0007744" key="25">
    <source>
    </source>
</evidence>
<evidence type="ECO:0007744" key="26">
    <source>
    </source>
</evidence>
<evidence type="ECO:0007744" key="27">
    <source>
    </source>
</evidence>
<evidence type="ECO:0007744" key="28">
    <source>
    </source>
</evidence>
<evidence type="ECO:0007744" key="29">
    <source>
    </source>
</evidence>
<evidence type="ECO:0007744" key="30">
    <source>
    </source>
</evidence>
<evidence type="ECO:0007829" key="31">
    <source>
        <dbReference type="PDB" id="4PJ1"/>
    </source>
</evidence>
<evidence type="ECO:0007829" key="32">
    <source>
        <dbReference type="PDB" id="6MRC"/>
    </source>
</evidence>
<evidence type="ECO:0007829" key="33">
    <source>
        <dbReference type="PDB" id="7L7S"/>
    </source>
</evidence>
<evidence type="ECO:0007829" key="34">
    <source>
        <dbReference type="PDB" id="8G7L"/>
    </source>
</evidence>
<evidence type="ECO:0007829" key="35">
    <source>
        <dbReference type="PDB" id="8G7N"/>
    </source>
</evidence>
<evidence type="ECO:0007829" key="36">
    <source>
        <dbReference type="PDB" id="8G7O"/>
    </source>
</evidence>
<proteinExistence type="evidence at protein level"/>
<keyword id="KW-0002">3D-structure</keyword>
<keyword id="KW-0007">Acetylation</keyword>
<keyword id="KW-0025">Alternative splicing</keyword>
<keyword id="KW-0067">ATP-binding</keyword>
<keyword id="KW-0143">Chaperone</keyword>
<keyword id="KW-0903">Direct protein sequencing</keyword>
<keyword id="KW-0225">Disease variant</keyword>
<keyword id="KW-0890">Hereditary spastic paraplegia</keyword>
<keyword id="KW-0945">Host-virus interaction</keyword>
<keyword id="KW-0413">Isomerase</keyword>
<keyword id="KW-1017">Isopeptide bond</keyword>
<keyword id="KW-1026">Leukodystrophy</keyword>
<keyword id="KW-0496">Mitochondrion</keyword>
<keyword id="KW-0523">Neurodegeneration</keyword>
<keyword id="KW-0547">Nucleotide-binding</keyword>
<keyword id="KW-0597">Phosphoprotein</keyword>
<keyword id="KW-1267">Proteomics identification</keyword>
<keyword id="KW-1185">Reference proteome</keyword>
<keyword id="KW-0809">Transit peptide</keyword>
<keyword id="KW-0832">Ubl conjugation</keyword>
<name>CH60_HUMAN</name>
<dbReference type="EC" id="5.6.1.7" evidence="20"/>
<dbReference type="EMBL" id="M22382">
    <property type="protein sequence ID" value="AAA60127.1"/>
    <property type="molecule type" value="mRNA"/>
</dbReference>
<dbReference type="EMBL" id="M34664">
    <property type="protein sequence ID" value="AAA36022.1"/>
    <property type="molecule type" value="mRNA"/>
</dbReference>
<dbReference type="EMBL" id="AJ250915">
    <property type="protein sequence ID" value="CAB75426.1"/>
    <property type="molecule type" value="Genomic_DNA"/>
</dbReference>
<dbReference type="EMBL" id="DQ217936">
    <property type="protein sequence ID" value="ABB01006.1"/>
    <property type="molecule type" value="Genomic_DNA"/>
</dbReference>
<dbReference type="EMBL" id="AK301276">
    <property type="protein sequence ID" value="BAH13448.1"/>
    <property type="molecule type" value="mRNA"/>
</dbReference>
<dbReference type="EMBL" id="AK312240">
    <property type="protein sequence ID" value="BAG35173.1"/>
    <property type="molecule type" value="mRNA"/>
</dbReference>
<dbReference type="EMBL" id="AC010746">
    <property type="status" value="NOT_ANNOTATED_CDS"/>
    <property type="molecule type" value="Genomic_DNA"/>
</dbReference>
<dbReference type="EMBL" id="AC020550">
    <property type="status" value="NOT_ANNOTATED_CDS"/>
    <property type="molecule type" value="Genomic_DNA"/>
</dbReference>
<dbReference type="EMBL" id="AC114809">
    <property type="status" value="NOT_ANNOTATED_CDS"/>
    <property type="molecule type" value="Genomic_DNA"/>
</dbReference>
<dbReference type="EMBL" id="BC002676">
    <property type="protein sequence ID" value="AAH02676.1"/>
    <property type="molecule type" value="mRNA"/>
</dbReference>
<dbReference type="EMBL" id="BC003030">
    <property type="protein sequence ID" value="AAH03030.1"/>
    <property type="molecule type" value="mRNA"/>
</dbReference>
<dbReference type="EMBL" id="BC067082">
    <property type="protein sequence ID" value="AAH67082.1"/>
    <property type="molecule type" value="mRNA"/>
</dbReference>
<dbReference type="EMBL" id="BC073746">
    <property type="protein sequence ID" value="AAH73746.1"/>
    <property type="molecule type" value="mRNA"/>
</dbReference>
<dbReference type="CCDS" id="CCDS33357.1">
    <molecule id="P10809-1"/>
</dbReference>
<dbReference type="PIR" id="A32800">
    <property type="entry name" value="A32800"/>
</dbReference>
<dbReference type="RefSeq" id="NP_002147.2">
    <molecule id="P10809-1"/>
    <property type="nucleotide sequence ID" value="NM_002156.4"/>
</dbReference>
<dbReference type="RefSeq" id="NP_955472.1">
    <molecule id="P10809-1"/>
    <property type="nucleotide sequence ID" value="NM_199440.2"/>
</dbReference>
<dbReference type="PDB" id="4PJ1">
    <property type="method" value="X-ray"/>
    <property type="resolution" value="3.15 A"/>
    <property type="chains" value="A/B/C/D/E/F/G/H/I/J/K/L/M/N=27-556"/>
</dbReference>
<dbReference type="PDB" id="6HT7">
    <property type="method" value="X-ray"/>
    <property type="resolution" value="3.70 A"/>
    <property type="chains" value="A/B/C/D/E/F/G/H/I/J/K/L/M/N=27-573"/>
</dbReference>
<dbReference type="PDB" id="6MRC">
    <property type="method" value="EM"/>
    <property type="resolution" value="3.08 A"/>
    <property type="chains" value="A/B/C/D/E/F/G/H/I/J/K/L/M/N=27-552"/>
</dbReference>
<dbReference type="PDB" id="6MRD">
    <property type="method" value="EM"/>
    <property type="resolution" value="3.82 A"/>
    <property type="chains" value="A/B/C/D/E/F/G=27-552"/>
</dbReference>
<dbReference type="PDB" id="7AZP">
    <property type="method" value="EM"/>
    <property type="resolution" value="3.50 A"/>
    <property type="chains" value="A/B/C/D/E/F/G=27-573"/>
</dbReference>
<dbReference type="PDB" id="7L7S">
    <property type="method" value="EM"/>
    <property type="resolution" value="3.50 A"/>
    <property type="chains" value="H/I/J/K/L/M/N=27-550"/>
</dbReference>
<dbReference type="PDB" id="8G7J">
    <property type="method" value="EM"/>
    <property type="resolution" value="3.40 A"/>
    <property type="chains" value="A/B/C/D/E/F/G=27-573"/>
</dbReference>
<dbReference type="PDB" id="8G7K">
    <property type="method" value="EM"/>
    <property type="resolution" value="3.80 A"/>
    <property type="chains" value="A/B/C/D/E/F/G=27-573"/>
</dbReference>
<dbReference type="PDB" id="8G7L">
    <property type="method" value="EM"/>
    <property type="resolution" value="2.50 A"/>
    <property type="chains" value="A/B/C/D/E/F/G/H/I/J/K/L/M/N=27-573"/>
</dbReference>
<dbReference type="PDB" id="8G7M">
    <property type="method" value="EM"/>
    <property type="resolution" value="3.20 A"/>
    <property type="chains" value="A/B/C/D/E/F/G=27-573"/>
</dbReference>
<dbReference type="PDB" id="8G7N">
    <property type="method" value="EM"/>
    <property type="resolution" value="2.70 A"/>
    <property type="chains" value="A/B/C/D/E/F/G/H/I/J/K/L/N/Y=27-573"/>
</dbReference>
<dbReference type="PDB" id="8G7O">
    <property type="method" value="EM"/>
    <property type="resolution" value="3.40 A"/>
    <property type="chains" value="A/B/C/D/E/F/G=27-552"/>
</dbReference>
<dbReference type="PDB" id="8U39">
    <property type="method" value="EM"/>
    <property type="resolution" value="3.40 A"/>
    <property type="chains" value="A/B/C/D/E/F/G=27-550"/>
</dbReference>
<dbReference type="PDBsum" id="4PJ1"/>
<dbReference type="PDBsum" id="6HT7"/>
<dbReference type="PDBsum" id="6MRC"/>
<dbReference type="PDBsum" id="6MRD"/>
<dbReference type="PDBsum" id="7AZP"/>
<dbReference type="PDBsum" id="7L7S"/>
<dbReference type="PDBsum" id="8G7J"/>
<dbReference type="PDBsum" id="8G7K"/>
<dbReference type="PDBsum" id="8G7L"/>
<dbReference type="PDBsum" id="8G7M"/>
<dbReference type="PDBsum" id="8G7N"/>
<dbReference type="PDBsum" id="8G7O"/>
<dbReference type="PDBsum" id="8U39"/>
<dbReference type="EMDB" id="EMD-10883"/>
<dbReference type="EMDB" id="EMD-10884"/>
<dbReference type="EMDB" id="EMD-10885"/>
<dbReference type="EMDB" id="EMD-10886"/>
<dbReference type="EMDB" id="EMD-11950"/>
<dbReference type="EMDB" id="EMD-23217"/>
<dbReference type="EMDB" id="EMD-29813"/>
<dbReference type="EMDB" id="EMD-29814"/>
<dbReference type="EMDB" id="EMD-29815"/>
<dbReference type="EMDB" id="EMD-29816"/>
<dbReference type="EMDB" id="EMD-29817"/>
<dbReference type="EMDB" id="EMD-29818"/>
<dbReference type="EMDB" id="EMD-41854"/>
<dbReference type="EMDB" id="EMD-9195"/>
<dbReference type="EMDB" id="EMD-9196"/>
<dbReference type="SMR" id="P10809"/>
<dbReference type="BioGRID" id="109561">
    <property type="interactions" value="1094"/>
</dbReference>
<dbReference type="CORUM" id="P10809"/>
<dbReference type="DIP" id="DIP-58N"/>
<dbReference type="FunCoup" id="P10809">
    <property type="interactions" value="1734"/>
</dbReference>
<dbReference type="IntAct" id="P10809">
    <property type="interactions" value="644"/>
</dbReference>
<dbReference type="MINT" id="P10809"/>
<dbReference type="STRING" id="9606.ENSP00000340019"/>
<dbReference type="BindingDB" id="P10809"/>
<dbReference type="ChEMBL" id="CHEMBL4721"/>
<dbReference type="DrugBank" id="DB09130">
    <property type="generic name" value="Copper"/>
</dbReference>
<dbReference type="DrugBank" id="DB06651">
    <property type="generic name" value="DiaPep 277"/>
</dbReference>
<dbReference type="MoonProt" id="P10809"/>
<dbReference type="CarbonylDB" id="P10809"/>
<dbReference type="GlyCosmos" id="P10809">
    <property type="glycosylation" value="1 site, 1 glycan"/>
</dbReference>
<dbReference type="GlyGen" id="P10809">
    <property type="glycosylation" value="5 sites, 5 N-linked glycans (1 site), 1 O-linked glycan (4 sites)"/>
</dbReference>
<dbReference type="iPTMnet" id="P10809"/>
<dbReference type="MetOSite" id="P10809"/>
<dbReference type="PhosphoSitePlus" id="P10809"/>
<dbReference type="SwissPalm" id="P10809"/>
<dbReference type="BioMuta" id="HSPD1"/>
<dbReference type="DMDM" id="129379"/>
<dbReference type="OGP" id="P10809"/>
<dbReference type="REPRODUCTION-2DPAGE" id="IPI00784154"/>
<dbReference type="REPRODUCTION-2DPAGE" id="P10809"/>
<dbReference type="CPTAC" id="CPTAC-391"/>
<dbReference type="CPTAC" id="CPTAC-392"/>
<dbReference type="jPOST" id="P10809"/>
<dbReference type="MassIVE" id="P10809"/>
<dbReference type="PaxDb" id="9606-ENSP00000373620"/>
<dbReference type="PeptideAtlas" id="P10809"/>
<dbReference type="PRIDE" id="P10809"/>
<dbReference type="ProteomicsDB" id="52653">
    <molecule id="P10809-1"/>
</dbReference>
<dbReference type="ProteomicsDB" id="6822"/>
<dbReference type="Pumba" id="P10809"/>
<dbReference type="TopDownProteomics" id="P10809-1">
    <molecule id="P10809-1"/>
</dbReference>
<dbReference type="ABCD" id="P10809">
    <property type="antibodies" value="9 sequenced antibodies"/>
</dbReference>
<dbReference type="Antibodypedia" id="869">
    <property type="antibodies" value="2434 antibodies from 52 providers"/>
</dbReference>
<dbReference type="CPTC" id="P10809">
    <property type="antibodies" value="3 antibodies"/>
</dbReference>
<dbReference type="DNASU" id="3329"/>
<dbReference type="Ensembl" id="ENST00000345042.6">
    <molecule id="P10809-1"/>
    <property type="protein sequence ID" value="ENSP00000340019.2"/>
    <property type="gene ID" value="ENSG00000144381.18"/>
</dbReference>
<dbReference type="Ensembl" id="ENST00000388968.8">
    <molecule id="P10809-1"/>
    <property type="protein sequence ID" value="ENSP00000373620.3"/>
    <property type="gene ID" value="ENSG00000144381.18"/>
</dbReference>
<dbReference type="Ensembl" id="ENST00000418022.2">
    <molecule id="P10809-1"/>
    <property type="protein sequence ID" value="ENSP00000412227.2"/>
    <property type="gene ID" value="ENSG00000144381.18"/>
</dbReference>
<dbReference type="Ensembl" id="ENST00000426480.2">
    <molecule id="P10809-1"/>
    <property type="protein sequence ID" value="ENSP00000414446.2"/>
    <property type="gene ID" value="ENSG00000144381.18"/>
</dbReference>
<dbReference type="Ensembl" id="ENST00000428204.6">
    <molecule id="P10809-1"/>
    <property type="protein sequence ID" value="ENSP00000396460.2"/>
    <property type="gene ID" value="ENSG00000144381.18"/>
</dbReference>
<dbReference type="Ensembl" id="ENST00000439605.2">
    <molecule id="P10809-1"/>
    <property type="protein sequence ID" value="ENSP00000402478.2"/>
    <property type="gene ID" value="ENSG00000144381.18"/>
</dbReference>
<dbReference type="Ensembl" id="ENST00000452200.6">
    <molecule id="P10809-1"/>
    <property type="protein sequence ID" value="ENSP00000412717.2"/>
    <property type="gene ID" value="ENSG00000144381.18"/>
</dbReference>
<dbReference type="Ensembl" id="ENST00000677913.1">
    <molecule id="P10809-1"/>
    <property type="protein sequence ID" value="ENSP00000503139.1"/>
    <property type="gene ID" value="ENSG00000144381.18"/>
</dbReference>
<dbReference type="Ensembl" id="ENST00000678761.1">
    <molecule id="P10809-1"/>
    <property type="protein sequence ID" value="ENSP00000503894.1"/>
    <property type="gene ID" value="ENSG00000144381.18"/>
</dbReference>
<dbReference type="GeneID" id="3329"/>
<dbReference type="KEGG" id="hsa:3329"/>
<dbReference type="MANE-Select" id="ENST00000388968.8">
    <property type="protein sequence ID" value="ENSP00000373620.3"/>
    <property type="RefSeq nucleotide sequence ID" value="NM_002156.5"/>
    <property type="RefSeq protein sequence ID" value="NP_002147.2"/>
</dbReference>
<dbReference type="UCSC" id="uc002uui.4">
    <molecule id="P10809-1"/>
    <property type="organism name" value="human"/>
</dbReference>
<dbReference type="AGR" id="HGNC:5261"/>
<dbReference type="CTD" id="3329"/>
<dbReference type="DisGeNET" id="3329"/>
<dbReference type="GeneCards" id="HSPD1"/>
<dbReference type="HGNC" id="HGNC:5261">
    <property type="gene designation" value="HSPD1"/>
</dbReference>
<dbReference type="HPA" id="ENSG00000144381">
    <property type="expression patterns" value="Tissue enhanced (adrenal)"/>
</dbReference>
<dbReference type="MalaCards" id="HSPD1"/>
<dbReference type="MIM" id="118190">
    <property type="type" value="gene"/>
</dbReference>
<dbReference type="MIM" id="605280">
    <property type="type" value="phenotype"/>
</dbReference>
<dbReference type="MIM" id="612233">
    <property type="type" value="phenotype"/>
</dbReference>
<dbReference type="neXtProt" id="NX_P10809"/>
<dbReference type="OpenTargets" id="ENSG00000144381"/>
<dbReference type="Orphanet" id="100994">
    <property type="disease" value="Autosomal dominant spastic paraplegia type 13"/>
</dbReference>
<dbReference type="Orphanet" id="280288">
    <property type="disease" value="Pelizaeus-Merzbacher-like disease due to HSPD1 mutation"/>
</dbReference>
<dbReference type="PharmGKB" id="PA29527"/>
<dbReference type="VEuPathDB" id="HostDB:ENSG00000144381"/>
<dbReference type="eggNOG" id="KOG0356">
    <property type="taxonomic scope" value="Eukaryota"/>
</dbReference>
<dbReference type="GeneTree" id="ENSGT00390000005727"/>
<dbReference type="HOGENOM" id="CLU_016503_3_0_1"/>
<dbReference type="InParanoid" id="P10809"/>
<dbReference type="OMA" id="TDTDKME"/>
<dbReference type="OrthoDB" id="1733909at2759"/>
<dbReference type="PAN-GO" id="P10809">
    <property type="GO annotations" value="12 GO annotations based on evolutionary models"/>
</dbReference>
<dbReference type="PhylomeDB" id="P10809"/>
<dbReference type="TreeFam" id="TF300475"/>
<dbReference type="PathwayCommons" id="P10809"/>
<dbReference type="Reactome" id="R-HSA-1268020">
    <property type="pathway name" value="Mitochondrial protein import"/>
</dbReference>
<dbReference type="Reactome" id="R-HSA-8869496">
    <property type="pathway name" value="TFAP2A acts as a transcriptional repressor during retinoic acid induced cell differentiation"/>
</dbReference>
<dbReference type="Reactome" id="R-HSA-9837999">
    <property type="pathway name" value="Mitochondrial protein degradation"/>
</dbReference>
<dbReference type="Reactome" id="R-HSA-9841251">
    <property type="pathway name" value="Mitochondrial unfolded protein response (UPRmt)"/>
</dbReference>
<dbReference type="SignaLink" id="P10809"/>
<dbReference type="SIGNOR" id="P10809"/>
<dbReference type="BioGRID-ORCS" id="3329">
    <property type="hits" value="577 hits in 1081 CRISPR screens"/>
</dbReference>
<dbReference type="CD-CODE" id="91857CE7">
    <property type="entry name" value="Nucleolus"/>
</dbReference>
<dbReference type="CD-CODE" id="DEE660B4">
    <property type="entry name" value="Stress granule"/>
</dbReference>
<dbReference type="CD-CODE" id="FB4E32DD">
    <property type="entry name" value="Presynaptic clusters and postsynaptic densities"/>
</dbReference>
<dbReference type="ChiTaRS" id="HSPD1">
    <property type="organism name" value="human"/>
</dbReference>
<dbReference type="EvolutionaryTrace" id="P10809"/>
<dbReference type="GeneWiki" id="GroEL"/>
<dbReference type="GenomeRNAi" id="3329"/>
<dbReference type="Pharos" id="P10809">
    <property type="development level" value="Tbio"/>
</dbReference>
<dbReference type="PRO" id="PR:P10809"/>
<dbReference type="Proteomes" id="UP000005640">
    <property type="component" value="Chromosome 2"/>
</dbReference>
<dbReference type="RNAct" id="P10809">
    <property type="molecule type" value="protein"/>
</dbReference>
<dbReference type="Bgee" id="ENSG00000144381">
    <property type="expression patterns" value="Expressed in adrenal tissue and 152 other cell types or tissues"/>
</dbReference>
<dbReference type="ExpressionAtlas" id="P10809">
    <property type="expression patterns" value="baseline and differential"/>
</dbReference>
<dbReference type="GO" id="GO:0009986">
    <property type="term" value="C:cell surface"/>
    <property type="evidence" value="ECO:0000314"/>
    <property type="project" value="UniProtKB"/>
</dbReference>
<dbReference type="GO" id="GO:0005905">
    <property type="term" value="C:clathrin-coated pit"/>
    <property type="evidence" value="ECO:0000314"/>
    <property type="project" value="BHF-UCL"/>
</dbReference>
<dbReference type="GO" id="GO:0030135">
    <property type="term" value="C:coated vesicle"/>
    <property type="evidence" value="ECO:0000314"/>
    <property type="project" value="BHF-UCL"/>
</dbReference>
<dbReference type="GO" id="GO:0005737">
    <property type="term" value="C:cytoplasm"/>
    <property type="evidence" value="ECO:0000314"/>
    <property type="project" value="UniProtKB"/>
</dbReference>
<dbReference type="GO" id="GO:0005829">
    <property type="term" value="C:cytosol"/>
    <property type="evidence" value="ECO:0000314"/>
    <property type="project" value="UniProtKB"/>
</dbReference>
<dbReference type="GO" id="GO:0005769">
    <property type="term" value="C:early endosome"/>
    <property type="evidence" value="ECO:0000314"/>
    <property type="project" value="BHF-UCL"/>
</dbReference>
<dbReference type="GO" id="GO:0070062">
    <property type="term" value="C:extracellular exosome"/>
    <property type="evidence" value="ECO:0000314"/>
    <property type="project" value="UniProtKB"/>
</dbReference>
<dbReference type="GO" id="GO:0005615">
    <property type="term" value="C:extracellular space"/>
    <property type="evidence" value="ECO:0000314"/>
    <property type="project" value="BHF-UCL"/>
</dbReference>
<dbReference type="GO" id="GO:0046696">
    <property type="term" value="C:lipopolysaccharide receptor complex"/>
    <property type="evidence" value="ECO:0000314"/>
    <property type="project" value="BHF-UCL"/>
</dbReference>
<dbReference type="GO" id="GO:0016020">
    <property type="term" value="C:membrane"/>
    <property type="evidence" value="ECO:0007005"/>
    <property type="project" value="UniProtKB"/>
</dbReference>
<dbReference type="GO" id="GO:0140494">
    <property type="term" value="C:migrasome"/>
    <property type="evidence" value="ECO:0007669"/>
    <property type="project" value="Ensembl"/>
</dbReference>
<dbReference type="GO" id="GO:0005743">
    <property type="term" value="C:mitochondrial inner membrane"/>
    <property type="evidence" value="ECO:0000250"/>
    <property type="project" value="BHF-UCL"/>
</dbReference>
<dbReference type="GO" id="GO:0005759">
    <property type="term" value="C:mitochondrial matrix"/>
    <property type="evidence" value="ECO:0000314"/>
    <property type="project" value="CAFA"/>
</dbReference>
<dbReference type="GO" id="GO:0005739">
    <property type="term" value="C:mitochondrion"/>
    <property type="evidence" value="ECO:0000314"/>
    <property type="project" value="HPA"/>
</dbReference>
<dbReference type="GO" id="GO:0005886">
    <property type="term" value="C:plasma membrane"/>
    <property type="evidence" value="ECO:0000314"/>
    <property type="project" value="CAFA"/>
</dbReference>
<dbReference type="GO" id="GO:0032991">
    <property type="term" value="C:protein-containing complex"/>
    <property type="evidence" value="ECO:0000314"/>
    <property type="project" value="UniProtKB"/>
</dbReference>
<dbReference type="GO" id="GO:0030141">
    <property type="term" value="C:secretory granule"/>
    <property type="evidence" value="ECO:0000250"/>
    <property type="project" value="BHF-UCL"/>
</dbReference>
<dbReference type="GO" id="GO:0097225">
    <property type="term" value="C:sperm midpiece"/>
    <property type="evidence" value="ECO:0000315"/>
    <property type="project" value="GO_Central"/>
</dbReference>
<dbReference type="GO" id="GO:0097524">
    <property type="term" value="C:sperm plasma membrane"/>
    <property type="evidence" value="ECO:0007669"/>
    <property type="project" value="Ensembl"/>
</dbReference>
<dbReference type="GO" id="GO:0034186">
    <property type="term" value="F:apolipoprotein A-I binding"/>
    <property type="evidence" value="ECO:0000353"/>
    <property type="project" value="CAFA"/>
</dbReference>
<dbReference type="GO" id="GO:0034185">
    <property type="term" value="F:apolipoprotein binding"/>
    <property type="evidence" value="ECO:0000353"/>
    <property type="project" value="CAFA"/>
</dbReference>
<dbReference type="GO" id="GO:0005524">
    <property type="term" value="F:ATP binding"/>
    <property type="evidence" value="ECO:0007669"/>
    <property type="project" value="UniProtKB-KW"/>
</dbReference>
<dbReference type="GO" id="GO:0016887">
    <property type="term" value="F:ATP hydrolysis activity"/>
    <property type="evidence" value="ECO:0000250"/>
    <property type="project" value="BHF-UCL"/>
</dbReference>
<dbReference type="GO" id="GO:0140662">
    <property type="term" value="F:ATP-dependent protein folding chaperone"/>
    <property type="evidence" value="ECO:0007669"/>
    <property type="project" value="InterPro"/>
</dbReference>
<dbReference type="GO" id="GO:0140608">
    <property type="term" value="F:cysteine-type endopeptidase activator activity"/>
    <property type="evidence" value="ECO:0000314"/>
    <property type="project" value="BHF-UCL"/>
</dbReference>
<dbReference type="GO" id="GO:0003688">
    <property type="term" value="F:DNA replication origin binding"/>
    <property type="evidence" value="ECO:0000250"/>
    <property type="project" value="BHF-UCL"/>
</dbReference>
<dbReference type="GO" id="GO:0003725">
    <property type="term" value="F:double-stranded RNA binding"/>
    <property type="evidence" value="ECO:0000314"/>
    <property type="project" value="MGI"/>
</dbReference>
<dbReference type="GO" id="GO:0019899">
    <property type="term" value="F:enzyme binding"/>
    <property type="evidence" value="ECO:0000353"/>
    <property type="project" value="CAFA"/>
</dbReference>
<dbReference type="GO" id="GO:0008035">
    <property type="term" value="F:high-density lipoprotein particle binding"/>
    <property type="evidence" value="ECO:0000314"/>
    <property type="project" value="CAFA"/>
</dbReference>
<dbReference type="GO" id="GO:0016853">
    <property type="term" value="F:isomerase activity"/>
    <property type="evidence" value="ECO:0007669"/>
    <property type="project" value="UniProtKB-KW"/>
</dbReference>
<dbReference type="GO" id="GO:0001530">
    <property type="term" value="F:lipopolysaccharide binding"/>
    <property type="evidence" value="ECO:0000314"/>
    <property type="project" value="BHF-UCL"/>
</dbReference>
<dbReference type="GO" id="GO:0002039">
    <property type="term" value="F:p53 binding"/>
    <property type="evidence" value="ECO:0000353"/>
    <property type="project" value="UniProtKB"/>
</dbReference>
<dbReference type="GO" id="GO:0051087">
    <property type="term" value="F:protein-folding chaperone binding"/>
    <property type="evidence" value="ECO:0000353"/>
    <property type="project" value="UniProtKB"/>
</dbReference>
<dbReference type="GO" id="GO:0003723">
    <property type="term" value="F:RNA binding"/>
    <property type="evidence" value="ECO:0007005"/>
    <property type="project" value="UniProtKB"/>
</dbReference>
<dbReference type="GO" id="GO:0003697">
    <property type="term" value="F:single-stranded DNA binding"/>
    <property type="evidence" value="ECO:0000250"/>
    <property type="project" value="BHF-UCL"/>
</dbReference>
<dbReference type="GO" id="GO:0031625">
    <property type="term" value="F:ubiquitin protein ligase binding"/>
    <property type="evidence" value="ECO:0000353"/>
    <property type="project" value="ParkinsonsUK-UCL"/>
</dbReference>
<dbReference type="GO" id="GO:0051082">
    <property type="term" value="F:unfolded protein binding"/>
    <property type="evidence" value="ECO:0000250"/>
    <property type="project" value="BHF-UCL"/>
</dbReference>
<dbReference type="GO" id="GO:0006458">
    <property type="term" value="P:'de novo' protein folding"/>
    <property type="evidence" value="ECO:0000250"/>
    <property type="project" value="BHF-UCL"/>
</dbReference>
<dbReference type="GO" id="GO:0008637">
    <property type="term" value="P:apoptotic mitochondrial changes"/>
    <property type="evidence" value="ECO:0000318"/>
    <property type="project" value="GO_Central"/>
</dbReference>
<dbReference type="GO" id="GO:0042113">
    <property type="term" value="P:B cell activation"/>
    <property type="evidence" value="ECO:0000314"/>
    <property type="project" value="BHF-UCL"/>
</dbReference>
<dbReference type="GO" id="GO:0042100">
    <property type="term" value="P:B cell proliferation"/>
    <property type="evidence" value="ECO:0000314"/>
    <property type="project" value="BHF-UCL"/>
</dbReference>
<dbReference type="GO" id="GO:0051702">
    <property type="term" value="P:biological process involved in interaction with symbiont"/>
    <property type="evidence" value="ECO:0000315"/>
    <property type="project" value="CAFA"/>
</dbReference>
<dbReference type="GO" id="GO:0098761">
    <property type="term" value="P:cellular response to interleukin-7"/>
    <property type="evidence" value="ECO:0007669"/>
    <property type="project" value="Ensembl"/>
</dbReference>
<dbReference type="GO" id="GO:0051131">
    <property type="term" value="P:chaperone-mediated protein complex assembly"/>
    <property type="evidence" value="ECO:0000250"/>
    <property type="project" value="BHF-UCL"/>
</dbReference>
<dbReference type="GO" id="GO:0048291">
    <property type="term" value="P:isotype switching to IgG isotypes"/>
    <property type="evidence" value="ECO:0000314"/>
    <property type="project" value="BHF-UCL"/>
</dbReference>
<dbReference type="GO" id="GO:0034514">
    <property type="term" value="P:mitochondrial unfolded protein response"/>
    <property type="evidence" value="ECO:0000318"/>
    <property type="project" value="GO_Central"/>
</dbReference>
<dbReference type="GO" id="GO:0002755">
    <property type="term" value="P:MyD88-dependent toll-like receptor signaling pathway"/>
    <property type="evidence" value="ECO:0000314"/>
    <property type="project" value="BHF-UCL"/>
</dbReference>
<dbReference type="GO" id="GO:0043066">
    <property type="term" value="P:negative regulation of apoptotic process"/>
    <property type="evidence" value="ECO:0000315"/>
    <property type="project" value="UniProtKB"/>
</dbReference>
<dbReference type="GO" id="GO:1900118">
    <property type="term" value="P:negative regulation of execution phase of apoptosis"/>
    <property type="evidence" value="ECO:0000315"/>
    <property type="project" value="BHF-UCL"/>
</dbReference>
<dbReference type="GO" id="GO:1900119">
    <property type="term" value="P:positive regulation of execution phase of apoptosis"/>
    <property type="evidence" value="ECO:0000315"/>
    <property type="project" value="BHF-UCL"/>
</dbReference>
<dbReference type="GO" id="GO:0032727">
    <property type="term" value="P:positive regulation of interferon-alpha production"/>
    <property type="evidence" value="ECO:0000314"/>
    <property type="project" value="BHF-UCL"/>
</dbReference>
<dbReference type="GO" id="GO:0032733">
    <property type="term" value="P:positive regulation of interleukin-10 production"/>
    <property type="evidence" value="ECO:0000314"/>
    <property type="project" value="BHF-UCL"/>
</dbReference>
<dbReference type="GO" id="GO:0032735">
    <property type="term" value="P:positive regulation of interleukin-12 production"/>
    <property type="evidence" value="ECO:0000314"/>
    <property type="project" value="BHF-UCL"/>
</dbReference>
<dbReference type="GO" id="GO:0032755">
    <property type="term" value="P:positive regulation of interleukin-6 production"/>
    <property type="evidence" value="ECO:0000314"/>
    <property type="project" value="BHF-UCL"/>
</dbReference>
<dbReference type="GO" id="GO:0043032">
    <property type="term" value="P:positive regulation of macrophage activation"/>
    <property type="evidence" value="ECO:0000314"/>
    <property type="project" value="BHF-UCL"/>
</dbReference>
<dbReference type="GO" id="GO:0050870">
    <property type="term" value="P:positive regulation of T cell activation"/>
    <property type="evidence" value="ECO:0000314"/>
    <property type="project" value="BHF-UCL"/>
</dbReference>
<dbReference type="GO" id="GO:0002842">
    <property type="term" value="P:positive regulation of T cell mediated immune response to tumor cell"/>
    <property type="evidence" value="ECO:0000314"/>
    <property type="project" value="BHF-UCL"/>
</dbReference>
<dbReference type="GO" id="GO:0032729">
    <property type="term" value="P:positive regulation of type II interferon production"/>
    <property type="evidence" value="ECO:0000314"/>
    <property type="project" value="BHF-UCL"/>
</dbReference>
<dbReference type="GO" id="GO:0006457">
    <property type="term" value="P:protein folding"/>
    <property type="evidence" value="ECO:0000318"/>
    <property type="project" value="GO_Central"/>
</dbReference>
<dbReference type="GO" id="GO:0045041">
    <property type="term" value="P:protein import into mitochondrial intermembrane space"/>
    <property type="evidence" value="ECO:0000318"/>
    <property type="project" value="GO_Central"/>
</dbReference>
<dbReference type="GO" id="GO:0051604">
    <property type="term" value="P:protein maturation"/>
    <property type="evidence" value="ECO:0000250"/>
    <property type="project" value="BHF-UCL"/>
</dbReference>
<dbReference type="GO" id="GO:0042026">
    <property type="term" value="P:protein refolding"/>
    <property type="evidence" value="ECO:0000314"/>
    <property type="project" value="UniProtKB"/>
</dbReference>
<dbReference type="GO" id="GO:0050821">
    <property type="term" value="P:protein stabilization"/>
    <property type="evidence" value="ECO:0000315"/>
    <property type="project" value="UniProtKB"/>
</dbReference>
<dbReference type="GO" id="GO:0009409">
    <property type="term" value="P:response to cold"/>
    <property type="evidence" value="ECO:0000250"/>
    <property type="project" value="AgBase"/>
</dbReference>
<dbReference type="GO" id="GO:0006986">
    <property type="term" value="P:response to unfolded protein"/>
    <property type="evidence" value="ECO:0000314"/>
    <property type="project" value="BHF-UCL"/>
</dbReference>
<dbReference type="GO" id="GO:0042110">
    <property type="term" value="P:T cell activation"/>
    <property type="evidence" value="ECO:0000314"/>
    <property type="project" value="MGI"/>
</dbReference>
<dbReference type="CDD" id="cd03344">
    <property type="entry name" value="GroEL"/>
    <property type="match status" value="1"/>
</dbReference>
<dbReference type="FunFam" id="3.50.7.10:FF:000001">
    <property type="entry name" value="60 kDa chaperonin"/>
    <property type="match status" value="1"/>
</dbReference>
<dbReference type="FunFam" id="3.30.260.10:FF:000019">
    <property type="entry name" value="60 kDa heat shock mitochondrial"/>
    <property type="match status" value="1"/>
</dbReference>
<dbReference type="FunFam" id="1.10.560.10:FF:000011">
    <property type="entry name" value="60 kDa heat shock protein, mitochondrial"/>
    <property type="match status" value="1"/>
</dbReference>
<dbReference type="FunFam" id="1.10.560.10:FF:000026">
    <property type="entry name" value="Chaperonin 60 subunit alpha 2 chloroplastic"/>
    <property type="match status" value="1"/>
</dbReference>
<dbReference type="FunFam" id="3.30.260.10:FF:000018">
    <property type="entry name" value="Heat shock protein 60"/>
    <property type="match status" value="1"/>
</dbReference>
<dbReference type="Gene3D" id="3.50.7.10">
    <property type="entry name" value="GroEL"/>
    <property type="match status" value="1"/>
</dbReference>
<dbReference type="Gene3D" id="1.10.560.10">
    <property type="entry name" value="GroEL-like equatorial domain"/>
    <property type="match status" value="1"/>
</dbReference>
<dbReference type="Gene3D" id="3.30.260.10">
    <property type="entry name" value="TCP-1-like chaperonin intermediate domain"/>
    <property type="match status" value="1"/>
</dbReference>
<dbReference type="HAMAP" id="MF_00600">
    <property type="entry name" value="CH60"/>
    <property type="match status" value="1"/>
</dbReference>
<dbReference type="InterPro" id="IPR018370">
    <property type="entry name" value="Chaperonin_Cpn60_CS"/>
</dbReference>
<dbReference type="InterPro" id="IPR001844">
    <property type="entry name" value="Cpn60/GroEL"/>
</dbReference>
<dbReference type="InterPro" id="IPR002423">
    <property type="entry name" value="Cpn60/GroEL/TCP-1"/>
</dbReference>
<dbReference type="InterPro" id="IPR027409">
    <property type="entry name" value="GroEL-like_apical_dom_sf"/>
</dbReference>
<dbReference type="InterPro" id="IPR027413">
    <property type="entry name" value="GROEL-like_equatorial_sf"/>
</dbReference>
<dbReference type="InterPro" id="IPR027410">
    <property type="entry name" value="TCP-1-like_intermed_sf"/>
</dbReference>
<dbReference type="NCBIfam" id="TIGR02348">
    <property type="entry name" value="GroEL"/>
    <property type="match status" value="1"/>
</dbReference>
<dbReference type="NCBIfam" id="NF000592">
    <property type="entry name" value="PRK00013.1"/>
    <property type="match status" value="1"/>
</dbReference>
<dbReference type="NCBIfam" id="NF009487">
    <property type="entry name" value="PRK12849.1"/>
    <property type="match status" value="1"/>
</dbReference>
<dbReference type="NCBIfam" id="NF009488">
    <property type="entry name" value="PRK12850.1"/>
    <property type="match status" value="1"/>
</dbReference>
<dbReference type="NCBIfam" id="NF009489">
    <property type="entry name" value="PRK12851.1"/>
    <property type="match status" value="1"/>
</dbReference>
<dbReference type="PANTHER" id="PTHR45633">
    <property type="entry name" value="60 KDA HEAT SHOCK PROTEIN, MITOCHONDRIAL"/>
    <property type="match status" value="1"/>
</dbReference>
<dbReference type="Pfam" id="PF00118">
    <property type="entry name" value="Cpn60_TCP1"/>
    <property type="match status" value="1"/>
</dbReference>
<dbReference type="PRINTS" id="PR00298">
    <property type="entry name" value="CHAPERONIN60"/>
</dbReference>
<dbReference type="SUPFAM" id="SSF52029">
    <property type="entry name" value="GroEL apical domain-like"/>
    <property type="match status" value="1"/>
</dbReference>
<dbReference type="SUPFAM" id="SSF48592">
    <property type="entry name" value="GroEL equatorial domain-like"/>
    <property type="match status" value="1"/>
</dbReference>
<dbReference type="SUPFAM" id="SSF54849">
    <property type="entry name" value="GroEL-intermediate domain like"/>
    <property type="match status" value="1"/>
</dbReference>
<dbReference type="PROSITE" id="PS00296">
    <property type="entry name" value="CHAPERONINS_CPN60"/>
    <property type="match status" value="1"/>
</dbReference>
<organism>
    <name type="scientific">Homo sapiens</name>
    <name type="common">Human</name>
    <dbReference type="NCBI Taxonomy" id="9606"/>
    <lineage>
        <taxon>Eukaryota</taxon>
        <taxon>Metazoa</taxon>
        <taxon>Chordata</taxon>
        <taxon>Craniata</taxon>
        <taxon>Vertebrata</taxon>
        <taxon>Euteleostomi</taxon>
        <taxon>Mammalia</taxon>
        <taxon>Eutheria</taxon>
        <taxon>Euarchontoglires</taxon>
        <taxon>Primates</taxon>
        <taxon>Haplorrhini</taxon>
        <taxon>Catarrhini</taxon>
        <taxon>Hominidae</taxon>
        <taxon>Homo</taxon>
    </lineage>
</organism>
<protein>
    <recommendedName>
        <fullName>60 kDa heat shock protein, mitochondrial</fullName>
        <ecNumber evidence="20">5.6.1.7</ecNumber>
    </recommendedName>
    <alternativeName>
        <fullName>60 kDa chaperonin</fullName>
    </alternativeName>
    <alternativeName>
        <fullName>Chaperonin 60</fullName>
        <shortName>CPN60</shortName>
    </alternativeName>
    <alternativeName>
        <fullName>Heat shock protein 60</fullName>
        <shortName>HSP-60</shortName>
        <shortName>Hsp60</shortName>
    </alternativeName>
    <alternativeName>
        <fullName>Heat shock protein family D member 1</fullName>
    </alternativeName>
    <alternativeName>
        <fullName>HuCHA60</fullName>
    </alternativeName>
    <alternativeName>
        <fullName>Mitochondrial matrix protein P1</fullName>
    </alternativeName>
    <alternativeName>
        <fullName>P60 lymphocyte protein</fullName>
    </alternativeName>
</protein>
<sequence length="573" mass="61055">MLRLPTVFRQMRPVSRVLAPHLTRAYAKDVKFGADARALMLQGVDLLADAVAVTMGPKGRTVIIEQSWGSPKVTKDGVTVAKSIDLKDKYKNIGAKLVQDVANNTNEEAGDGTTTATVLARSIAKEGFEKISKGANPVEIRRGVMLAVDAVIAELKKQSKPVTTPEEIAQVATISANGDKEIGNIISDAMKKVGRKGVITVKDGKTLNDELEIIEGMKFDRGYISPYFINTSKGQKCEFQDAYVLLSEKKISSIQSIVPALEIANAHRKPLVIIAEDVDGEALSTLVLNRLKVGLQVVAVKAPGFGDNRKNQLKDMAIATGGAVFGEEGLTLNLEDVQPHDLGKVGEVIVTKDDAMLLKGKGDKAQIEKRIQEIIEQLDVTTSEYEKEKLNERLAKLSDGVAVLKVGGTSDVEVNEKKDRVTDALNATRAAVEEGIVLGGGCALLRCIPALDSLTPANEDQKIGIEIIKRTLKIPAMTIAKNAGVEGSLIVEKIMQSSSEVGYDAMAGDFVNMVEKGIIDPTKVVRTALLDAAGVASLLTTAEVVVTEIPKEEKDPGMGAMGGMGGGMGGGMF</sequence>
<reference key="1">
    <citation type="journal article" date="1989" name="Mol. Cell. Biol.">
        <title>Primary structure of a human mitochondrial protein homologous to the bacterial and plant chaperonins and to the 65-kilodalton mycobacterial antigen.</title>
        <authorList>
            <person name="Jindal S."/>
            <person name="Dudani A.K."/>
            <person name="Singh B."/>
            <person name="Harley C.B."/>
            <person name="Gupta R.S."/>
        </authorList>
    </citation>
    <scope>NUCLEOTIDE SEQUENCE [MRNA] (ISOFORM 1)</scope>
</reference>
<reference key="2">
    <citation type="journal article" date="1990" name="DNA Cell Biol.">
        <title>Nucleotide sequences and novel structural features of human and Chinese hamster hsp60 (chaperonin) gene families.</title>
        <authorList>
            <person name="Venner T.J."/>
            <person name="Singh B."/>
            <person name="Gupta R.S."/>
        </authorList>
    </citation>
    <scope>NUCLEOTIDE SEQUENCE [MRNA] (ISOFORM 1)</scope>
</reference>
<reference key="3">
    <citation type="journal article" date="2003" name="Hum. Genet.">
        <title>Genomic structure of the human mitochondrial chaperonin genes: HSP60 and HSP10 are localised head to head on chromosome 2 separated by a bidirectional promoter.</title>
        <authorList>
            <person name="Hansen J.J."/>
            <person name="Bross P."/>
            <person name="Westergaard M."/>
            <person name="Nielsen M.N."/>
            <person name="Eiberg H."/>
            <person name="Boerglum A.D."/>
            <person name="Mogensen J."/>
            <person name="Kristiansen K."/>
            <person name="Bolund L."/>
            <person name="Gregersen N."/>
        </authorList>
    </citation>
    <scope>NUCLEOTIDE SEQUENCE [GENOMIC DNA]</scope>
</reference>
<reference key="4">
    <citation type="submission" date="2005-09" db="EMBL/GenBank/DDBJ databases">
        <title>Genetic variation in immune response genes.</title>
        <authorList>
            <person name="Tan J."/>
            <person name="Ong R."/>
            <person name="Hibberd M.L."/>
            <person name="Seielstad M."/>
        </authorList>
    </citation>
    <scope>NUCLEOTIDE SEQUENCE [GENOMIC DNA]</scope>
</reference>
<reference key="5">
    <citation type="journal article" date="2004" name="Nat. Genet.">
        <title>Complete sequencing and characterization of 21,243 full-length human cDNAs.</title>
        <authorList>
            <person name="Ota T."/>
            <person name="Suzuki Y."/>
            <person name="Nishikawa T."/>
            <person name="Otsuki T."/>
            <person name="Sugiyama T."/>
            <person name="Irie R."/>
            <person name="Wakamatsu A."/>
            <person name="Hayashi K."/>
            <person name="Sato H."/>
            <person name="Nagai K."/>
            <person name="Kimura K."/>
            <person name="Makita H."/>
            <person name="Sekine M."/>
            <person name="Obayashi M."/>
            <person name="Nishi T."/>
            <person name="Shibahara T."/>
            <person name="Tanaka T."/>
            <person name="Ishii S."/>
            <person name="Yamamoto J."/>
            <person name="Saito K."/>
            <person name="Kawai Y."/>
            <person name="Isono Y."/>
            <person name="Nakamura Y."/>
            <person name="Nagahari K."/>
            <person name="Murakami K."/>
            <person name="Yasuda T."/>
            <person name="Iwayanagi T."/>
            <person name="Wagatsuma M."/>
            <person name="Shiratori A."/>
            <person name="Sudo H."/>
            <person name="Hosoiri T."/>
            <person name="Kaku Y."/>
            <person name="Kodaira H."/>
            <person name="Kondo H."/>
            <person name="Sugawara M."/>
            <person name="Takahashi M."/>
            <person name="Kanda K."/>
            <person name="Yokoi T."/>
            <person name="Furuya T."/>
            <person name="Kikkawa E."/>
            <person name="Omura Y."/>
            <person name="Abe K."/>
            <person name="Kamihara K."/>
            <person name="Katsuta N."/>
            <person name="Sato K."/>
            <person name="Tanikawa M."/>
            <person name="Yamazaki M."/>
            <person name="Ninomiya K."/>
            <person name="Ishibashi T."/>
            <person name="Yamashita H."/>
            <person name="Murakawa K."/>
            <person name="Fujimori K."/>
            <person name="Tanai H."/>
            <person name="Kimata M."/>
            <person name="Watanabe M."/>
            <person name="Hiraoka S."/>
            <person name="Chiba Y."/>
            <person name="Ishida S."/>
            <person name="Ono Y."/>
            <person name="Takiguchi S."/>
            <person name="Watanabe S."/>
            <person name="Yosida M."/>
            <person name="Hotuta T."/>
            <person name="Kusano J."/>
            <person name="Kanehori K."/>
            <person name="Takahashi-Fujii A."/>
            <person name="Hara H."/>
            <person name="Tanase T.-O."/>
            <person name="Nomura Y."/>
            <person name="Togiya S."/>
            <person name="Komai F."/>
            <person name="Hara R."/>
            <person name="Takeuchi K."/>
            <person name="Arita M."/>
            <person name="Imose N."/>
            <person name="Musashino K."/>
            <person name="Yuuki H."/>
            <person name="Oshima A."/>
            <person name="Sasaki N."/>
            <person name="Aotsuka S."/>
            <person name="Yoshikawa Y."/>
            <person name="Matsunawa H."/>
            <person name="Ichihara T."/>
            <person name="Shiohata N."/>
            <person name="Sano S."/>
            <person name="Moriya S."/>
            <person name="Momiyama H."/>
            <person name="Satoh N."/>
            <person name="Takami S."/>
            <person name="Terashima Y."/>
            <person name="Suzuki O."/>
            <person name="Nakagawa S."/>
            <person name="Senoh A."/>
            <person name="Mizoguchi H."/>
            <person name="Goto Y."/>
            <person name="Shimizu F."/>
            <person name="Wakebe H."/>
            <person name="Hishigaki H."/>
            <person name="Watanabe T."/>
            <person name="Sugiyama A."/>
            <person name="Takemoto M."/>
            <person name="Kawakami B."/>
            <person name="Yamazaki M."/>
            <person name="Watanabe K."/>
            <person name="Kumagai A."/>
            <person name="Itakura S."/>
            <person name="Fukuzumi Y."/>
            <person name="Fujimori Y."/>
            <person name="Komiyama M."/>
            <person name="Tashiro H."/>
            <person name="Tanigami A."/>
            <person name="Fujiwara T."/>
            <person name="Ono T."/>
            <person name="Yamada K."/>
            <person name="Fujii Y."/>
            <person name="Ozaki K."/>
            <person name="Hirao M."/>
            <person name="Ohmori Y."/>
            <person name="Kawabata A."/>
            <person name="Hikiji T."/>
            <person name="Kobatake N."/>
            <person name="Inagaki H."/>
            <person name="Ikema Y."/>
            <person name="Okamoto S."/>
            <person name="Okitani R."/>
            <person name="Kawakami T."/>
            <person name="Noguchi S."/>
            <person name="Itoh T."/>
            <person name="Shigeta K."/>
            <person name="Senba T."/>
            <person name="Matsumura K."/>
            <person name="Nakajima Y."/>
            <person name="Mizuno T."/>
            <person name="Morinaga M."/>
            <person name="Sasaki M."/>
            <person name="Togashi T."/>
            <person name="Oyama M."/>
            <person name="Hata H."/>
            <person name="Watanabe M."/>
            <person name="Komatsu T."/>
            <person name="Mizushima-Sugano J."/>
            <person name="Satoh T."/>
            <person name="Shirai Y."/>
            <person name="Takahashi Y."/>
            <person name="Nakagawa K."/>
            <person name="Okumura K."/>
            <person name="Nagase T."/>
            <person name="Nomura N."/>
            <person name="Kikuchi H."/>
            <person name="Masuho Y."/>
            <person name="Yamashita R."/>
            <person name="Nakai K."/>
            <person name="Yada T."/>
            <person name="Nakamura Y."/>
            <person name="Ohara O."/>
            <person name="Isogai T."/>
            <person name="Sugano S."/>
        </authorList>
    </citation>
    <scope>NUCLEOTIDE SEQUENCE [LARGE SCALE MRNA] (ISOFORMS 1 AND 2)</scope>
    <source>
        <tissue>Adrenal gland</tissue>
        <tissue>Spleen</tissue>
    </source>
</reference>
<reference key="6">
    <citation type="journal article" date="2005" name="Nature">
        <title>Generation and annotation of the DNA sequences of human chromosomes 2 and 4.</title>
        <authorList>
            <person name="Hillier L.W."/>
            <person name="Graves T.A."/>
            <person name="Fulton R.S."/>
            <person name="Fulton L.A."/>
            <person name="Pepin K.H."/>
            <person name="Minx P."/>
            <person name="Wagner-McPherson C."/>
            <person name="Layman D."/>
            <person name="Wylie K."/>
            <person name="Sekhon M."/>
            <person name="Becker M.C."/>
            <person name="Fewell G.A."/>
            <person name="Delehaunty K.D."/>
            <person name="Miner T.L."/>
            <person name="Nash W.E."/>
            <person name="Kremitzki C."/>
            <person name="Oddy L."/>
            <person name="Du H."/>
            <person name="Sun H."/>
            <person name="Bradshaw-Cordum H."/>
            <person name="Ali J."/>
            <person name="Carter J."/>
            <person name="Cordes M."/>
            <person name="Harris A."/>
            <person name="Isak A."/>
            <person name="van Brunt A."/>
            <person name="Nguyen C."/>
            <person name="Du F."/>
            <person name="Courtney L."/>
            <person name="Kalicki J."/>
            <person name="Ozersky P."/>
            <person name="Abbott S."/>
            <person name="Armstrong J."/>
            <person name="Belter E.A."/>
            <person name="Caruso L."/>
            <person name="Cedroni M."/>
            <person name="Cotton M."/>
            <person name="Davidson T."/>
            <person name="Desai A."/>
            <person name="Elliott G."/>
            <person name="Erb T."/>
            <person name="Fronick C."/>
            <person name="Gaige T."/>
            <person name="Haakenson W."/>
            <person name="Haglund K."/>
            <person name="Holmes A."/>
            <person name="Harkins R."/>
            <person name="Kim K."/>
            <person name="Kruchowski S.S."/>
            <person name="Strong C.M."/>
            <person name="Grewal N."/>
            <person name="Goyea E."/>
            <person name="Hou S."/>
            <person name="Levy A."/>
            <person name="Martinka S."/>
            <person name="Mead K."/>
            <person name="McLellan M.D."/>
            <person name="Meyer R."/>
            <person name="Randall-Maher J."/>
            <person name="Tomlinson C."/>
            <person name="Dauphin-Kohlberg S."/>
            <person name="Kozlowicz-Reilly A."/>
            <person name="Shah N."/>
            <person name="Swearengen-Shahid S."/>
            <person name="Snider J."/>
            <person name="Strong J.T."/>
            <person name="Thompson J."/>
            <person name="Yoakum M."/>
            <person name="Leonard S."/>
            <person name="Pearman C."/>
            <person name="Trani L."/>
            <person name="Radionenko M."/>
            <person name="Waligorski J.E."/>
            <person name="Wang C."/>
            <person name="Rock S.M."/>
            <person name="Tin-Wollam A.-M."/>
            <person name="Maupin R."/>
            <person name="Latreille P."/>
            <person name="Wendl M.C."/>
            <person name="Yang S.-P."/>
            <person name="Pohl C."/>
            <person name="Wallis J.W."/>
            <person name="Spieth J."/>
            <person name="Bieri T.A."/>
            <person name="Berkowicz N."/>
            <person name="Nelson J.O."/>
            <person name="Osborne J."/>
            <person name="Ding L."/>
            <person name="Meyer R."/>
            <person name="Sabo A."/>
            <person name="Shotland Y."/>
            <person name="Sinha P."/>
            <person name="Wohldmann P.E."/>
            <person name="Cook L.L."/>
            <person name="Hickenbotham M.T."/>
            <person name="Eldred J."/>
            <person name="Williams D."/>
            <person name="Jones T.A."/>
            <person name="She X."/>
            <person name="Ciccarelli F.D."/>
            <person name="Izaurralde E."/>
            <person name="Taylor J."/>
            <person name="Schmutz J."/>
            <person name="Myers R.M."/>
            <person name="Cox D.R."/>
            <person name="Huang X."/>
            <person name="McPherson J.D."/>
            <person name="Mardis E.R."/>
            <person name="Clifton S.W."/>
            <person name="Warren W.C."/>
            <person name="Chinwalla A.T."/>
            <person name="Eddy S.R."/>
            <person name="Marra M.A."/>
            <person name="Ovcharenko I."/>
            <person name="Furey T.S."/>
            <person name="Miller W."/>
            <person name="Eichler E.E."/>
            <person name="Bork P."/>
            <person name="Suyama M."/>
            <person name="Torrents D."/>
            <person name="Waterston R.H."/>
            <person name="Wilson R.K."/>
        </authorList>
    </citation>
    <scope>NUCLEOTIDE SEQUENCE [LARGE SCALE GENOMIC DNA]</scope>
</reference>
<reference key="7">
    <citation type="journal article" date="2004" name="Genome Res.">
        <title>The status, quality, and expansion of the NIH full-length cDNA project: the Mammalian Gene Collection (MGC).</title>
        <authorList>
            <consortium name="The MGC Project Team"/>
        </authorList>
    </citation>
    <scope>NUCLEOTIDE SEQUENCE [LARGE SCALE MRNA] (ISOFORM 1)</scope>
    <source>
        <tissue>Lung</tissue>
        <tissue>Skin</tissue>
        <tissue>Uterus</tissue>
    </source>
</reference>
<reference key="8">
    <citation type="journal article" date="1988" name="Biol. Chem. Hoppe-Seyler">
        <title>Amino-acid sequence homology of a polymorphic cellular protein from human lymphocytes and the chaperonins from Escherichia coli (groEL) and chloroplasts (Rubisco-binding protein).</title>
        <authorList>
            <person name="Waldinger D."/>
            <person name="Eckerskorn C."/>
            <person name="Lottspeich F."/>
            <person name="Cleve H."/>
        </authorList>
    </citation>
    <scope>PROTEIN SEQUENCE OF 27-573</scope>
</reference>
<reference key="9">
    <citation type="journal article" date="1990" name="Electrophoresis">
        <title>Development of a database of amino acid sequences for human colon carcinoma proteins separated by two-dimensional polyacrylamide gel electrophoresis.</title>
        <authorList>
            <person name="Ward L.D."/>
            <person name="Hong J."/>
            <person name="Whitehead R.H."/>
            <person name="Simpson R.J."/>
        </authorList>
    </citation>
    <scope>PROTEIN SEQUENCE OF 27-55</scope>
    <source>
        <tissue>Colon carcinoma</tissue>
    </source>
</reference>
<reference key="10">
    <citation type="journal article" date="1992" name="J. Virol.">
        <title>Complex formation of human T-cell leukemia virus type I p40tax transactivator with cellular polypeptides.</title>
        <authorList>
            <person name="Nagata K."/>
            <person name="Ide Y."/>
            <person name="Takagi T."/>
            <person name="Ohtani K."/>
            <person name="Aoshima M."/>
            <person name="Tozawa H."/>
            <person name="Nakamura M."/>
            <person name="Sugamura K."/>
        </authorList>
    </citation>
    <scope>PROTEIN SEQUENCE OF 27-55</scope>
    <scope>INTERACTION WITH HTLV-1 P40TAX (MICROBIAL INFECTION)</scope>
</reference>
<reference key="11">
    <citation type="journal article" date="1997" name="Electrophoresis">
        <title>Two-dimensional electrophoretic analysis of human breast carcinoma proteins: mapping of proteins that bind to the SH3 domain of mixed lineage kinase MLK2.</title>
        <authorList>
            <person name="Rasmussen R.K."/>
            <person name="Ji H."/>
            <person name="Eddes J.S."/>
            <person name="Moritz R.L."/>
            <person name="Reid G.E."/>
            <person name="Simpson R.J."/>
            <person name="Dorow D.S."/>
        </authorList>
    </citation>
    <scope>PROTEIN SEQUENCE OF 27-50</scope>
    <source>
        <tissue>Mammary carcinoma</tissue>
    </source>
</reference>
<reference key="12">
    <citation type="journal article" date="1994" name="Electrophoresis">
        <title>The human myocardial two-dimensional gel protein database: update 1994.</title>
        <authorList>
            <person name="Corbett J.M."/>
            <person name="Wheeler C.H."/>
            <person name="Baker C.S."/>
            <person name="Yacoub M.H."/>
            <person name="Dunn M.J."/>
        </authorList>
    </citation>
    <scope>PROTEIN SEQUENCE OF 27-46</scope>
    <source>
        <tissue>Heart</tissue>
    </source>
</reference>
<reference key="13">
    <citation type="journal article" date="2003" name="Nat. Biotechnol.">
        <title>Exploring proteomes and analyzing protein processing by mass spectrometric identification of sorted N-terminal peptides.</title>
        <authorList>
            <person name="Gevaert K."/>
            <person name="Goethals M."/>
            <person name="Martens L."/>
            <person name="Van Damme J."/>
            <person name="Staes A."/>
            <person name="Thomas G.R."/>
            <person name="Vandekerckhove J."/>
        </authorList>
    </citation>
    <scope>PROTEIN SEQUENCE OF 27-37</scope>
    <source>
        <tissue>Platelet</tissue>
    </source>
</reference>
<reference key="14">
    <citation type="journal article" date="1992" name="Electrophoresis">
        <title>Human liver protein map: a reference database established by microsequencing and gel comparison.</title>
        <authorList>
            <person name="Hochstrasser D.F."/>
            <person name="Frutiger S."/>
            <person name="Paquet N."/>
            <person name="Bairoch A."/>
            <person name="Ravier F."/>
            <person name="Pasquali C."/>
            <person name="Sanchez J.-C."/>
            <person name="Tissot J.-D."/>
            <person name="Bjellqvist B."/>
            <person name="Vargas R."/>
            <person name="Appel R.D."/>
            <person name="Hughes G.J."/>
        </authorList>
    </citation>
    <scope>PROTEIN SEQUENCE OF 27-35</scope>
    <source>
        <tissue>Liver</tissue>
    </source>
</reference>
<reference key="15">
    <citation type="submission" date="2004-10" db="UniProtKB">
        <authorList>
            <person name="Bienvenut W.V."/>
        </authorList>
    </citation>
    <scope>PROTEIN SEQUENCE OF 61-72</scope>
    <scope>IDENTIFICATION BY MASS SPECTROMETRY</scope>
    <source>
        <tissue>B-cell lymphoma</tissue>
    </source>
</reference>
<reference key="16">
    <citation type="submission" date="2008-12" db="UniProtKB">
        <authorList>
            <person name="Lubec G."/>
            <person name="Vishwanath V."/>
            <person name="Chen W.-Q."/>
            <person name="Sun Y."/>
        </authorList>
    </citation>
    <scope>PROTEIN SEQUENCE OF 61-72; 206-218; 237-249; 251-290; 430-446 AND 463-469</scope>
    <scope>IDENTIFICATION BY MASS SPECTROMETRY</scope>
    <source>
        <tissue>Brain</tissue>
        <tissue>Cajal-Retzius cell</tissue>
        <tissue>Fetal brain cortex</tissue>
    </source>
</reference>
<reference key="17">
    <citation type="journal article" date="2004" name="Biochem. J.">
        <title>Vectorial proteomics reveal targeting, phosphorylation and specific fragmentation of polymerase I and transcript release factor (PTRF) at the surface of caveolae in human adipocytes.</title>
        <authorList>
            <person name="Aboulaich N."/>
            <person name="Vainonen J.P."/>
            <person name="Stralfors P."/>
            <person name="Vener A.V."/>
        </authorList>
    </citation>
    <scope>PROTEIN SEQUENCE OF 97-121; 251-268 AND 430-446</scope>
    <source>
        <tissue>Adipocyte</tissue>
    </source>
</reference>
<reference key="18">
    <citation type="journal article" date="1997" name="Electrophoresis">
        <title>A two-dimensional gel database of human colon carcinoma proteins.</title>
        <authorList>
            <person name="Ji H."/>
            <person name="Reid G.E."/>
            <person name="Moritz R.L."/>
            <person name="Eddes J.S."/>
            <person name="Burgess A.W."/>
            <person name="Simpson R.J."/>
        </authorList>
    </citation>
    <scope>PARTIAL PROTEIN SEQUENCE</scope>
    <source>
        <tissue>Colon carcinoma</tissue>
    </source>
</reference>
<reference key="19">
    <citation type="journal article" date="1990" name="Biochem. Biophys. Res. Commun.">
        <title>Mitochondrial import of the human chaperonin (HSP60) protein.</title>
        <authorList>
            <person name="Singh B."/>
            <person name="Patel H.V."/>
            <person name="Ridley R.G."/>
            <person name="Freeman K.B."/>
            <person name="Gupta R.S."/>
        </authorList>
    </citation>
    <scope>MITOCHONDRIAL IMPORT</scope>
</reference>
<reference key="20">
    <citation type="journal article" date="1992" name="J. Biol. Chem.">
        <title>Mammalian mitochondrial chaperonin 60 functions as a single toroidal ring.</title>
        <authorList>
            <person name="Viitanen P.V."/>
            <person name="Lorimer G.H."/>
            <person name="Seetharam R."/>
            <person name="Gupta R.S."/>
            <person name="Oppenheim J."/>
            <person name="Thomas J.O."/>
            <person name="Cowan N.J."/>
        </authorList>
    </citation>
    <scope>FUNCTION</scope>
    <scope>SUBUNIT</scope>
</reference>
<reference key="21">
    <citation type="journal article" date="2001" name="Eur. J. Biochem.">
        <title>The effect of nucleotides and mitochondrial chaperonin 10 on the structure and chaperone activity of mitochondrial chaperonin 60.</title>
        <authorList>
            <person name="Levy-Rimler G."/>
            <person name="Viitanen P."/>
            <person name="Weiss C."/>
            <person name="Sharkia R."/>
            <person name="Greenberg A."/>
            <person name="Niv A."/>
            <person name="Lustig A."/>
            <person name="Delarea Y."/>
            <person name="Azem A."/>
        </authorList>
    </citation>
    <scope>FUNCTION</scope>
    <scope>SUBUNIT</scope>
</reference>
<reference key="22">
    <citation type="journal article" date="2003" name="Nature">
        <title>Proteomic characterization of the human centrosome by protein correlation profiling.</title>
        <authorList>
            <person name="Andersen J.S."/>
            <person name="Wilkinson C.J."/>
            <person name="Mayor T."/>
            <person name="Mortensen P."/>
            <person name="Nigg E.A."/>
            <person name="Mann M."/>
        </authorList>
    </citation>
    <scope>IDENTIFICATION BY MASS SPECTROMETRY</scope>
    <source>
        <tissue>Lymphoblast</tissue>
    </source>
</reference>
<reference key="23">
    <citation type="journal article" date="2004" name="Biochem. Biophys. Res. Commun.">
        <title>Interaction of the hepatitis B virus X protein (HBx) with heat shock protein 60 enhances HBx-mediated apoptosis.</title>
        <authorList>
            <person name="Tanaka Y."/>
            <person name="Kanai F."/>
            <person name="Kawakami T."/>
            <person name="Tateishi K."/>
            <person name="Ijichi H."/>
            <person name="Kawabe T."/>
            <person name="Arakawa Y."/>
            <person name="Kawakami T."/>
            <person name="Nishimura T."/>
            <person name="Shirakata Y."/>
            <person name="Koike K."/>
            <person name="Omata M."/>
        </authorList>
    </citation>
    <scope>INTERACTION WITH HBV PROTEIN X (MICROBIAL INFECTION)</scope>
</reference>
<reference key="24">
    <citation type="journal article" date="2005" name="Nat. Biotechnol.">
        <title>Immunoaffinity profiling of tyrosine phosphorylation in cancer cells.</title>
        <authorList>
            <person name="Rush J."/>
            <person name="Moritz A."/>
            <person name="Lee K.A."/>
            <person name="Guo A."/>
            <person name="Goss V.L."/>
            <person name="Spek E.J."/>
            <person name="Zhang H."/>
            <person name="Zha X.-M."/>
            <person name="Polakiewicz R.D."/>
            <person name="Comb M.J."/>
        </authorList>
    </citation>
    <scope>IDENTIFICATION BY MASS SPECTROMETRY [LARGE SCALE ANALYSIS]</scope>
</reference>
<reference key="25">
    <citation type="journal article" date="2006" name="Nat. Biotechnol.">
        <title>A probability-based approach for high-throughput protein phosphorylation analysis and site localization.</title>
        <authorList>
            <person name="Beausoleil S.A."/>
            <person name="Villen J."/>
            <person name="Gerber S.A."/>
            <person name="Rush J."/>
            <person name="Gygi S.P."/>
        </authorList>
    </citation>
    <scope>PHOSPHORYLATION [LARGE SCALE ANALYSIS] AT SER-70</scope>
    <scope>IDENTIFICATION BY MASS SPECTROMETRY [LARGE SCALE ANALYSIS]</scope>
    <source>
        <tissue>Cervix carcinoma</tissue>
    </source>
</reference>
<reference key="26">
    <citation type="journal article" date="2008" name="Proc. Natl. Acad. Sci. U.S.A.">
        <title>A quantitative atlas of mitotic phosphorylation.</title>
        <authorList>
            <person name="Dephoure N."/>
            <person name="Zhou C."/>
            <person name="Villen J."/>
            <person name="Beausoleil S.A."/>
            <person name="Bakalarski C.E."/>
            <person name="Elledge S.J."/>
            <person name="Gygi S.P."/>
        </authorList>
    </citation>
    <scope>PHOSPHORYLATION [LARGE SCALE ANALYSIS] AT SER-70</scope>
    <scope>IDENTIFICATION BY MASS SPECTROMETRY [LARGE SCALE ANALYSIS]</scope>
    <source>
        <tissue>Cervix carcinoma</tissue>
    </source>
</reference>
<reference key="27">
    <citation type="journal article" date="2009" name="Sci. Signal.">
        <title>Quantitative phosphoproteomic analysis of T cell receptor signaling reveals system-wide modulation of protein-protein interactions.</title>
        <authorList>
            <person name="Mayya V."/>
            <person name="Lundgren D.H."/>
            <person name="Hwang S.-I."/>
            <person name="Rezaul K."/>
            <person name="Wu L."/>
            <person name="Eng J.K."/>
            <person name="Rodionov V."/>
            <person name="Han D.K."/>
        </authorList>
    </citation>
    <scope>IDENTIFICATION BY MASS SPECTROMETRY [LARGE SCALE ANALYSIS]</scope>
    <source>
        <tissue>Leukemic T-cell</tissue>
    </source>
</reference>
<reference key="28">
    <citation type="journal article" date="2009" name="Science">
        <title>Lysine acetylation targets protein complexes and co-regulates major cellular functions.</title>
        <authorList>
            <person name="Choudhary C."/>
            <person name="Kumar C."/>
            <person name="Gnad F."/>
            <person name="Nielsen M.L."/>
            <person name="Rehman M."/>
            <person name="Walther T.C."/>
            <person name="Olsen J.V."/>
            <person name="Mann M."/>
        </authorList>
    </citation>
    <scope>ACETYLATION [LARGE SCALE ANALYSIS] AT LYS-82; LYS-125; LYS-130; LYS-202; LYS-218; LYS-269; LYS-352; LYS-359; LYS-396 AND LYS-469</scope>
    <scope>IDENTIFICATION BY MASS SPECTROMETRY [LARGE SCALE ANALYSIS]</scope>
</reference>
<reference key="29">
    <citation type="journal article" date="2010" name="Sci. Signal.">
        <title>Quantitative phosphoproteomics reveals widespread full phosphorylation site occupancy during mitosis.</title>
        <authorList>
            <person name="Olsen J.V."/>
            <person name="Vermeulen M."/>
            <person name="Santamaria A."/>
            <person name="Kumar C."/>
            <person name="Miller M.L."/>
            <person name="Jensen L.J."/>
            <person name="Gnad F."/>
            <person name="Cox J."/>
            <person name="Jensen T.S."/>
            <person name="Nigg E.A."/>
            <person name="Brunak S."/>
            <person name="Mann M."/>
        </authorList>
    </citation>
    <scope>PHOSPHORYLATION [LARGE SCALE ANALYSIS] AT SER-70</scope>
    <scope>IDENTIFICATION BY MASS SPECTROMETRY [LARGE SCALE ANALYSIS]</scope>
    <source>
        <tissue>Cervix carcinoma</tissue>
    </source>
</reference>
<reference key="30">
    <citation type="journal article" date="2011" name="BMC Syst. Biol.">
        <title>Initial characterization of the human central proteome.</title>
        <authorList>
            <person name="Burkard T.R."/>
            <person name="Planyavsky M."/>
            <person name="Kaupe I."/>
            <person name="Breitwieser F.P."/>
            <person name="Buerckstuemmer T."/>
            <person name="Bennett K.L."/>
            <person name="Superti-Furga G."/>
            <person name="Colinge J."/>
        </authorList>
    </citation>
    <scope>IDENTIFICATION BY MASS SPECTROMETRY [LARGE SCALE ANALYSIS]</scope>
</reference>
<reference key="31">
    <citation type="journal article" date="2011" name="Mol. Cell. Proteomics">
        <title>The first identification of lysine malonylation substrates and its regulatory enzyme.</title>
        <authorList>
            <person name="Peng C."/>
            <person name="Lu Z."/>
            <person name="Xie Z."/>
            <person name="Cheng Z."/>
            <person name="Chen Y."/>
            <person name="Tan M."/>
            <person name="Luo H."/>
            <person name="Zhang Y."/>
            <person name="He W."/>
            <person name="Yang K."/>
            <person name="Zwaans B.M."/>
            <person name="Tishkoff D."/>
            <person name="Ho L."/>
            <person name="Lombard D."/>
            <person name="He T.C."/>
            <person name="Dai J."/>
            <person name="Verdin E."/>
            <person name="Ye Y."/>
            <person name="Zhao Y."/>
        </authorList>
    </citation>
    <scope>MALONYLATION AT LYS-133</scope>
</reference>
<reference key="32">
    <citation type="journal article" date="2011" name="Sci. Signal.">
        <title>System-wide temporal characterization of the proteome and phosphoproteome of human embryonic stem cell differentiation.</title>
        <authorList>
            <person name="Rigbolt K.T."/>
            <person name="Prokhorova T.A."/>
            <person name="Akimov V."/>
            <person name="Henningsen J."/>
            <person name="Johansen P.T."/>
            <person name="Kratchmarova I."/>
            <person name="Kassem M."/>
            <person name="Mann M."/>
            <person name="Olsen J.V."/>
            <person name="Blagoev B."/>
        </authorList>
    </citation>
    <scope>PHOSPHORYLATION [LARGE SCALE ANALYSIS] AT SER-70</scope>
    <scope>IDENTIFICATION BY MASS SPECTROMETRY [LARGE SCALE ANALYSIS]</scope>
</reference>
<reference key="33">
    <citation type="journal article" date="2012" name="J. Proteome Res.">
        <title>Resveratrol-induced changes of the human adipocyte secretion profile.</title>
        <authorList>
            <person name="Rosenow A."/>
            <person name="Noben J.P."/>
            <person name="Jocken J."/>
            <person name="Kallendrusch S."/>
            <person name="Fischer-Posovszky P."/>
            <person name="Mariman E.C."/>
            <person name="Renes J."/>
        </authorList>
    </citation>
    <scope>IDENTIFICATION BY MASS SPECTROMETRY [LARGE SCALE ANALYSIS]</scope>
</reference>
<reference key="34">
    <citation type="journal article" date="2012" name="Mitochondrion">
        <title>ATAD3B is a human embryonic stem cell specific mitochondrial protein, re-expressed in cancer cells, that functions as dominant negative for the ubiquitous ATAD3A.</title>
        <authorList>
            <person name="Merle N."/>
            <person name="Feraud O."/>
            <person name="Gilquin B."/>
            <person name="Hubstenberger A."/>
            <person name="Kieffer-Jacquinot S."/>
            <person name="Assard N."/>
            <person name="Bennaceur-Griscelli A."/>
            <person name="Honnorat J."/>
            <person name="Baudier J."/>
        </authorList>
    </citation>
    <scope>INTERACTION WITH ATAD3A</scope>
</reference>
<reference key="35">
    <citation type="journal article" date="2013" name="J. Proteome Res.">
        <title>Toward a comprehensive characterization of a human cancer cell phosphoproteome.</title>
        <authorList>
            <person name="Zhou H."/>
            <person name="Di Palma S."/>
            <person name="Preisinger C."/>
            <person name="Peng M."/>
            <person name="Polat A.N."/>
            <person name="Heck A.J."/>
            <person name="Mohammed S."/>
        </authorList>
    </citation>
    <scope>PHOSPHORYLATION [LARGE SCALE ANALYSIS] AT SER-70 AND SER-488</scope>
    <scope>IDENTIFICATION BY MASS SPECTROMETRY [LARGE SCALE ANALYSIS]</scope>
    <source>
        <tissue>Cervix carcinoma</tissue>
        <tissue>Erythroleukemia</tissue>
    </source>
</reference>
<reference key="36">
    <citation type="journal article" date="2013" name="PLoS Genet.">
        <title>A newly uncovered group of distantly related lysine methyltransferases preferentially interact with molecular chaperones to regulate their activity.</title>
        <authorList>
            <person name="Cloutier P."/>
            <person name="Lavallee-Adam M."/>
            <person name="Faubert D."/>
            <person name="Blanchette M."/>
            <person name="Coulombe B."/>
        </authorList>
    </citation>
    <scope>INTERACTION WITH ETFBKMT AND EEF1AKMT3</scope>
</reference>
<reference key="37">
    <citation type="journal article" date="2014" name="FEBS J.">
        <title>GTP binding controls complex formation by the human ROCO protein MASL1.</title>
        <authorList>
            <person name="Dihanich S."/>
            <person name="Civiero L."/>
            <person name="Manzoni C."/>
            <person name="Mamais A."/>
            <person name="Bandopadhyay R."/>
            <person name="Greggio E."/>
            <person name="Lewis P.A."/>
        </authorList>
    </citation>
    <scope>INTERACTION WITH MFHAS1</scope>
</reference>
<reference key="38">
    <citation type="journal article" date="2014" name="J. Proteomics">
        <title>An enzyme assisted RP-RPLC approach for in-depth analysis of human liver phosphoproteome.</title>
        <authorList>
            <person name="Bian Y."/>
            <person name="Song C."/>
            <person name="Cheng K."/>
            <person name="Dong M."/>
            <person name="Wang F."/>
            <person name="Huang J."/>
            <person name="Sun D."/>
            <person name="Wang L."/>
            <person name="Ye M."/>
            <person name="Zou H."/>
        </authorList>
    </citation>
    <scope>PHOSPHORYLATION [LARGE SCALE ANALYSIS] AT SER-67 AND TYR-90</scope>
    <scope>IDENTIFICATION BY MASS SPECTROMETRY [LARGE SCALE ANALYSIS]</scope>
    <source>
        <tissue>Liver</tissue>
    </source>
</reference>
<reference key="39">
    <citation type="journal article" date="2015" name="Proteomics">
        <title>N-terminome analysis of the human mitochondrial proteome.</title>
        <authorList>
            <person name="Vaca Jacome A.S."/>
            <person name="Rabilloud T."/>
            <person name="Schaeffer-Reiss C."/>
            <person name="Rompais M."/>
            <person name="Ayoub D."/>
            <person name="Lane L."/>
            <person name="Bairoch A."/>
            <person name="Van Dorsselaer A."/>
            <person name="Carapito C."/>
        </authorList>
    </citation>
    <scope>IDENTIFICATION BY MASS SPECTROMETRY [LARGE SCALE ANALYSIS]</scope>
</reference>
<reference key="40">
    <citation type="journal article" date="2017" name="Nat. Struct. Mol. Biol.">
        <title>Site-specific mapping of the human SUMO proteome reveals co-modification with phosphorylation.</title>
        <authorList>
            <person name="Hendriks I.A."/>
            <person name="Lyon D."/>
            <person name="Young C."/>
            <person name="Jensen L.J."/>
            <person name="Vertegaal A.C."/>
            <person name="Nielsen M.L."/>
        </authorList>
    </citation>
    <scope>SUMOYLATION [LARGE SCALE ANALYSIS] AT LYS-551</scope>
    <scope>IDENTIFICATION BY MASS SPECTROMETRY [LARGE SCALE ANALYSIS]</scope>
</reference>
<reference key="41">
    <citation type="journal article" date="2015" name="Proc. Natl. Acad. Sci. U.S.A.">
        <title>Crystal structure of the human mitochondrial chaperonin symmetrical football complex.</title>
        <authorList>
            <person name="Nisemblat S."/>
            <person name="Yaniv O."/>
            <person name="Parnas A."/>
            <person name="Frolow F."/>
            <person name="Azem A."/>
        </authorList>
    </citation>
    <scope>X-RAY CRYSTALLOGRAPHY (3.15 ANGSTROMS) OF 27-556 IN COMPLEX WITH ADP</scope>
    <scope>SUBUNIT</scope>
    <scope>FUNCTION</scope>
</reference>
<reference key="42">
    <citation type="journal article" date="2002" name="Am. J. Hum. Genet.">
        <title>Hereditary spastic paraplegia SPG13 is associated with a mutation in the gene encoding the mitochondrial chaperonin Hsp60.</title>
        <authorList>
            <person name="Hansen J.J."/>
            <person name="Durr A."/>
            <person name="Cournu-Rebeix I."/>
            <person name="Georgopoulos C."/>
            <person name="Ang D."/>
            <person name="Nielsen M.N."/>
            <person name="Davoine C.-S."/>
            <person name="Brice A."/>
            <person name="Fontaine B."/>
            <person name="Gregersen N."/>
            <person name="Bross P."/>
        </authorList>
    </citation>
    <scope>VARIANT SPG13 ILE-98</scope>
</reference>
<reference key="43">
    <citation type="journal article" date="2008" name="Am. J. Hum. Genet.">
        <title>Mitochondrial Hsp60 chaperonopathy causes an autosomal-recessive neurodegenerative disorder linked to brain hypomyelination and leukodystrophy.</title>
        <authorList>
            <person name="Magen D."/>
            <person name="Georgopoulos C."/>
            <person name="Bross P."/>
            <person name="Ang D."/>
            <person name="Segev Y."/>
            <person name="Goldsher D."/>
            <person name="Nemirovski A."/>
            <person name="Shahar E."/>
            <person name="Ravid S."/>
            <person name="Luder A."/>
            <person name="Heno B."/>
            <person name="Gershoni-Baruch R."/>
            <person name="Skorecki K."/>
            <person name="Mandel H."/>
        </authorList>
    </citation>
    <scope>VARIANT HLD4 GLY-29</scope>
    <scope>CHARACTERIZATION OF VARIANT HLD4 GLY-29</scope>
</reference>
<accession>P10809</accession>
<accession>B2R5M6</accession>
<accession>B7Z712</accession>
<accession>Q38L19</accession>
<accession>Q9UCR6</accession>
<comment type="function">
    <text evidence="2 6 21">Chaperonin implicated in mitochondrial protein import and macromolecular assembly. Together with Hsp10, facilitates the correct folding of imported proteins. May also prevent misfolding and promote the refolding and proper assembly of unfolded polypeptides generated under stress conditions in the mitochondrial matrix (PubMed:11422376, PubMed:1346131). The functional units of these chaperonins consist of heptameric rings of the large subunit Hsp60, which function as a back-to-back double ring. In a cyclic reaction, Hsp60 ring complexes bind one unfolded substrate protein per ring, followed by the binding of ATP and association with 2 heptameric rings of the co-chaperonin Hsp10. This leads to sequestration of the substrate protein in the inner cavity of Hsp60 where, for a certain period of time, it can fold undisturbed by other cell components. Synchronous hydrolysis of ATP in all Hsp60 subunits results in the dissociation of the chaperonin rings and the release of ADP and the folded substrate protein (Probable).</text>
</comment>
<comment type="catalytic activity">
    <reaction evidence="20">
        <text>ATP + H2O + a folded polypeptide = ADP + phosphate + an unfolded polypeptide.</text>
        <dbReference type="EC" id="5.6.1.7"/>
    </reaction>
</comment>
<comment type="subunit">
    <text evidence="1 2 6 12 13 14 15">Homoheptamer arranged in a ring structure (PubMed:11422376, PubMed:1346131, PubMed:25918392). The functional units of these chaperonins consist of heptameric rings of the large subunit Hsp60, which function as a back-to-back double ring. Interacts with 2 heptameric Hsp10 rings to form the symmetrical football complex (PubMed:25918392). Interacts with HRAS (By similarity). Interacts with ATAD3A (PubMed:22664726). Interacts with ETFBKMT and EEF1AKMT3 (PubMed:23349634). Interacts with MFHAS1 (PubMed:24286120).</text>
</comment>
<comment type="subunit">
    <text evidence="7">(Microbial infection) Interacts with hepatitis B virus/HBV protein X.</text>
</comment>
<comment type="subunit">
    <text evidence="8">(Microbial infection) Interacts with HTLV-1 protein p40tax.</text>
</comment>
<comment type="interaction">
    <interactant intactId="EBI-352528">
        <id>P10809</id>
    </interactant>
    <interactant intactId="EBI-351428">
        <id>P61158</id>
        <label>ACTR3</label>
    </interactant>
    <organismsDiffer>false</organismsDiffer>
    <experiments>3</experiments>
</comment>
<comment type="interaction">
    <interactant intactId="EBI-352528">
        <id>P10809</id>
    </interactant>
    <interactant intactId="EBI-77613">
        <id>P05067</id>
        <label>APP</label>
    </interactant>
    <organismsDiffer>false</organismsDiffer>
    <experiments>6</experiments>
</comment>
<comment type="interaction">
    <interactant intactId="EBI-352528">
        <id>P10809</id>
    </interactant>
    <interactant intactId="EBI-352007">
        <id>Q9NVI7</id>
        <label>ATAD3A</label>
    </interactant>
    <organismsDiffer>false</organismsDiffer>
    <experiments>4</experiments>
</comment>
<comment type="interaction">
    <interactant intactId="EBI-352528">
        <id>P10809</id>
    </interactant>
    <interactant intactId="EBI-3926101">
        <id>O15382</id>
        <label>BCAT2</label>
    </interactant>
    <organismsDiffer>false</organismsDiffer>
    <experiments>5</experiments>
</comment>
<comment type="interaction">
    <interactant intactId="EBI-352528">
        <id>P10809</id>
    </interactant>
    <interactant intactId="EBI-7105206">
        <id>Q9UMX3</id>
        <label>BOK</label>
    </interactant>
    <organismsDiffer>false</organismsDiffer>
    <experiments>3</experiments>
</comment>
<comment type="interaction">
    <interactant intactId="EBI-352528">
        <id>P10809</id>
    </interactant>
    <interactant intactId="EBI-349905">
        <id>P38398</id>
        <label>BRCA1</label>
    </interactant>
    <organismsDiffer>false</organismsDiffer>
    <experiments>2</experiments>
</comment>
<comment type="interaction">
    <interactant intactId="EBI-352528">
        <id>P10809</id>
    </interactant>
    <interactant intactId="EBI-739624">
        <id>Q8NHQ1</id>
        <label>CEP70</label>
    </interactant>
    <organismsDiffer>false</organismsDiffer>
    <experiments>6</experiments>
</comment>
<comment type="interaction">
    <interactant intactId="EBI-352528">
        <id>P10809</id>
    </interactant>
    <interactant intactId="EBI-349854">
        <id>P13569</id>
        <label>CFTR</label>
    </interactant>
    <organismsDiffer>false</organismsDiffer>
    <experiments>24</experiments>
</comment>
<comment type="interaction">
    <interactant intactId="EBI-352528">
        <id>P10809</id>
    </interactant>
    <interactant intactId="EBI-25837549">
        <id>P28329-3</id>
        <label>CHAT</label>
    </interactant>
    <organismsDiffer>false</organismsDiffer>
    <experiments>3</experiments>
</comment>
<comment type="interaction">
    <interactant intactId="EBI-352528">
        <id>P10809</id>
    </interactant>
    <interactant intactId="EBI-3867333">
        <id>A8MQ03</id>
        <label>CYSRT1</label>
    </interactant>
    <organismsDiffer>false</organismsDiffer>
    <experiments>3</experiments>
</comment>
<comment type="interaction">
    <interactant intactId="EBI-352528">
        <id>P10809</id>
    </interactant>
    <interactant intactId="EBI-3917045">
        <id>Q6PI48</id>
        <label>DARS2</label>
    </interactant>
    <organismsDiffer>false</organismsDiffer>
    <experiments>5</experiments>
</comment>
<comment type="interaction">
    <interactant intactId="EBI-352528">
        <id>P10809</id>
    </interactant>
    <interactant intactId="EBI-372690">
        <id>Q9UBU7</id>
        <label>DBF4</label>
    </interactant>
    <organismsDiffer>false</organismsDiffer>
    <experiments>3</experiments>
</comment>
<comment type="interaction">
    <interactant intactId="EBI-352528">
        <id>P10809</id>
    </interactant>
    <interactant intactId="EBI-372173">
        <id>O77932</id>
        <label>DXO</label>
    </interactant>
    <organismsDiffer>false</organismsDiffer>
    <experiments>3</experiments>
</comment>
<comment type="interaction">
    <interactant intactId="EBI-352528">
        <id>P10809</id>
    </interactant>
    <interactant intactId="EBI-3924130">
        <id>Q99944</id>
        <label>EGFL8</label>
    </interactant>
    <organismsDiffer>false</organismsDiffer>
    <experiments>3</experiments>
</comment>
<comment type="interaction">
    <interactant intactId="EBI-352528">
        <id>P10809</id>
    </interactant>
    <interactant intactId="EBI-10213520">
        <id>Q6NXG1</id>
        <label>ESRP1</label>
    </interactant>
    <organismsDiffer>false</organismsDiffer>
    <experiments>3</experiments>
</comment>
<comment type="interaction">
    <interactant intactId="EBI-352528">
        <id>P10809</id>
    </interactant>
    <interactant intactId="EBI-9089567">
        <id>Q99504</id>
        <label>EYA3</label>
    </interactant>
    <organismsDiffer>false</organismsDiffer>
    <experiments>3</experiments>
</comment>
<comment type="interaction">
    <interactant intactId="EBI-352528">
        <id>P10809</id>
    </interactant>
    <interactant intactId="EBI-348399">
        <id>P22607</id>
        <label>FGFR3</label>
    </interactant>
    <organismsDiffer>false</organismsDiffer>
    <experiments>3</experiments>
</comment>
<comment type="interaction">
    <interactant intactId="EBI-352528">
        <id>P10809</id>
    </interactant>
    <interactant intactId="EBI-8285963">
        <id>Q14957</id>
        <label>GRIN2C</label>
    </interactant>
    <organismsDiffer>false</organismsDiffer>
    <experiments>3</experiments>
</comment>
<comment type="interaction">
    <interactant intactId="EBI-352528">
        <id>P10809</id>
    </interactant>
    <interactant intactId="EBI-350145">
        <id>P01112</id>
        <label>HRAS</label>
    </interactant>
    <organismsDiffer>false</organismsDiffer>
    <experiments>3</experiments>
</comment>
<comment type="interaction">
    <interactant intactId="EBI-352528">
        <id>P10809</id>
    </interactant>
    <interactant intactId="EBI-1210876">
        <id>P51553</id>
        <label>IDH3G</label>
    </interactant>
    <organismsDiffer>false</organismsDiffer>
    <experiments>3</experiments>
</comment>
<comment type="interaction">
    <interactant intactId="EBI-352528">
        <id>P10809</id>
    </interactant>
    <interactant intactId="EBI-6509505">
        <id>Q0VD86</id>
        <label>INCA1</label>
    </interactant>
    <organismsDiffer>false</organismsDiffer>
    <experiments>3</experiments>
</comment>
<comment type="interaction">
    <interactant intactId="EBI-352528">
        <id>P10809</id>
    </interactant>
    <interactant intactId="EBI-852823">
        <id>P05412</id>
        <label>JUN</label>
    </interactant>
    <organismsDiffer>false</organismsDiffer>
    <experiments>5</experiments>
</comment>
<comment type="interaction">
    <interactant intactId="EBI-352528">
        <id>P10809</id>
    </interactant>
    <interactant intactId="EBI-948001">
        <id>Q15323</id>
        <label>KRT31</label>
    </interactant>
    <organismsDiffer>false</organismsDiffer>
    <experiments>3</experiments>
</comment>
<comment type="interaction">
    <interactant intactId="EBI-352528">
        <id>P10809</id>
    </interactant>
    <interactant intactId="EBI-1047093">
        <id>O76011</id>
        <label>KRT34</label>
    </interactant>
    <organismsDiffer>false</organismsDiffer>
    <experiments>3</experiments>
</comment>
<comment type="interaction">
    <interactant intactId="EBI-352528">
        <id>P10809</id>
    </interactant>
    <interactant intactId="EBI-10171697">
        <id>Q6A162</id>
        <label>KRT40</label>
    </interactant>
    <organismsDiffer>false</organismsDiffer>
    <experiments>3</experiments>
</comment>
<comment type="interaction">
    <interactant intactId="EBI-352528">
        <id>P10809</id>
    </interactant>
    <interactant intactId="EBI-10171774">
        <id>P60410</id>
        <label>KRTAP10-8</label>
    </interactant>
    <organismsDiffer>false</organismsDiffer>
    <experiments>3</experiments>
</comment>
<comment type="interaction">
    <interactant intactId="EBI-352528">
        <id>P10809</id>
    </interactant>
    <interactant intactId="EBI-3958099">
        <id>P26371</id>
        <label>KRTAP5-9</label>
    </interactant>
    <organismsDiffer>false</organismsDiffer>
    <experiments>3</experiments>
</comment>
<comment type="interaction">
    <interactant intactId="EBI-352528">
        <id>P10809</id>
    </interactant>
    <interactant intactId="EBI-9088686">
        <id>Q14847-2</id>
        <label>LASP1</label>
    </interactant>
    <organismsDiffer>false</organismsDiffer>
    <experiments>3</experiments>
</comment>
<comment type="interaction">
    <interactant intactId="EBI-352528">
        <id>P10809</id>
    </interactant>
    <interactant intactId="EBI-25830459">
        <id>Q6ZQX7-4</id>
        <label>LIAT1</label>
    </interactant>
    <organismsDiffer>false</organismsDiffer>
    <experiments>3</experiments>
</comment>
<comment type="interaction">
    <interactant intactId="EBI-352528">
        <id>P10809</id>
    </interactant>
    <interactant intactId="EBI-741037">
        <id>Q9BRK4</id>
        <label>LZTS2</label>
    </interactant>
    <organismsDiffer>false</organismsDiffer>
    <experiments>7</experiments>
</comment>
<comment type="interaction">
    <interactant intactId="EBI-352528">
        <id>P10809</id>
    </interactant>
    <interactant intactId="EBI-2864441">
        <id>Q9Y4C4</id>
        <label>MFHAS1</label>
    </interactant>
    <organismsDiffer>false</organismsDiffer>
    <experiments>3</experiments>
</comment>
<comment type="interaction">
    <interactant intactId="EBI-352528">
        <id>P10809</id>
    </interactant>
    <interactant intactId="EBI-2880271">
        <id>P12036</id>
        <label>NEFH</label>
    </interactant>
    <organismsDiffer>false</organismsDiffer>
    <experiments>3</experiments>
</comment>
<comment type="interaction">
    <interactant intactId="EBI-352528">
        <id>P10809</id>
    </interactant>
    <interactant intactId="EBI-945833">
        <id>Q7Z3S9</id>
        <label>NOTCH2NLA</label>
    </interactant>
    <organismsDiffer>false</organismsDiffer>
    <experiments>3</experiments>
</comment>
<comment type="interaction">
    <interactant intactId="EBI-352528">
        <id>P10809</id>
    </interactant>
    <interactant intactId="EBI-743880">
        <id>Q8WUY3</id>
        <label>PRUNE2</label>
    </interactant>
    <organismsDiffer>false</organismsDiffer>
    <experiments>3</experiments>
</comment>
<comment type="interaction">
    <interactant intactId="EBI-352528">
        <id>P10809</id>
    </interactant>
    <interactant intactId="EBI-1052678">
        <id>O76081</id>
        <label>RGS20</label>
    </interactant>
    <organismsDiffer>false</organismsDiffer>
    <experiments>3</experiments>
</comment>
<comment type="interaction">
    <interactant intactId="EBI-352528">
        <id>P10809</id>
    </interactant>
    <interactant intactId="EBI-10178530">
        <id>O76081-6</id>
        <label>RGS20</label>
    </interactant>
    <organismsDiffer>false</organismsDiffer>
    <experiments>3</experiments>
</comment>
<comment type="interaction">
    <interactant intactId="EBI-352528">
        <id>P10809</id>
    </interactant>
    <interactant intactId="EBI-748741">
        <id>Q8N6K7</id>
        <label>SAMD3</label>
    </interactant>
    <organismsDiffer>false</organismsDiffer>
    <experiments>4</experiments>
</comment>
<comment type="interaction">
    <interactant intactId="EBI-352528">
        <id>P10809</id>
    </interactant>
    <interactant intactId="EBI-396540">
        <id>Q12888</id>
        <label>TP53BP1</label>
    </interactant>
    <organismsDiffer>false</organismsDiffer>
    <experiments>3</experiments>
</comment>
<comment type="interaction">
    <interactant intactId="EBI-352528">
        <id>P10809</id>
    </interactant>
    <interactant intactId="EBI-11141397">
        <id>Q9UBQ0-2</id>
        <label>VPS29</label>
    </interactant>
    <organismsDiffer>false</organismsDiffer>
    <experiments>3</experiments>
</comment>
<comment type="interaction">
    <interactant intactId="EBI-352528">
        <id>P10809</id>
    </interactant>
    <interactant intactId="EBI-9817007">
        <id>Q9JJY3</id>
        <label>Smpd3</label>
    </interactant>
    <organismsDiffer>true</organismsDiffer>
    <experiments>3</experiments>
</comment>
<comment type="subcellular location">
    <subcellularLocation>
        <location>Mitochondrion matrix</location>
    </subcellularLocation>
</comment>
<comment type="alternative products">
    <event type="alternative splicing"/>
    <isoform>
        <id>P10809-1</id>
        <name>1</name>
        <sequence type="displayed"/>
    </isoform>
    <isoform>
        <id>P10809-2</id>
        <name>2</name>
        <sequence type="described" ref="VSP_056144 VSP_056145"/>
    </isoform>
</comment>
<comment type="disease" evidence="3">
    <disease id="DI-01039">
        <name>Spastic paraplegia 13, autosomal dominant</name>
        <acronym>SPG13</acronym>
        <description>A form of spastic paraplegia, a neurodegenerative disorder characterized by a slow, gradual, progressive weakness and spasticity of the lower limbs. Rate of progression and the severity of symptoms are quite variable. Initial symptoms may include difficulty with balance, weakness and stiffness in the legs, muscle spasms, and dragging the toes when walking. In some forms of the disorder, bladder symptoms (such as incontinence) may appear, or the weakness and stiffness may spread to other parts of the body.</description>
        <dbReference type="MIM" id="605280"/>
    </disease>
    <text>The disease is caused by variants affecting the gene represented in this entry.</text>
</comment>
<comment type="disease" evidence="9">
    <disease id="DI-00650">
        <name>Leukodystrophy, hypomyelinating, 4</name>
        <acronym>HLD4</acronym>
        <description>A severe autosomal recessive hypomyelinating leukodystrophy. Clinically characterized by infantile-onset rotary nystagmus, progressive spastic paraplegia, neurologic regression, motor impairment, profound intellectual disability. Death usually occurs within the first two decades of life.</description>
        <dbReference type="MIM" id="612233"/>
    </disease>
    <text>The disease is caused by variants affecting the gene represented in this entry.</text>
</comment>
<comment type="similarity">
    <text evidence="20">Belongs to the chaperonin (HSP60) family.</text>
</comment>
<comment type="online information" name="Atlas of Genetics and Cytogenetics in Oncology and Haematology">
    <link uri="https://atlasgeneticsoncology.org/gene/40888/HSPD1"/>
</comment>
<gene>
    <name type="primary">HSPD1</name>
    <name type="synonym">HSP60</name>
</gene>
<feature type="transit peptide" description="Mitochondrion" evidence="4 5 8 10 16 17 18">
    <location>
        <begin position="1"/>
        <end position="26"/>
    </location>
</feature>
<feature type="chain" id="PRO_0000005026" description="60 kDa heat shock protein, mitochondrial">
    <location>
        <begin position="27"/>
        <end position="573"/>
    </location>
</feature>
<feature type="binding site" evidence="15 22">
    <location>
        <position position="75"/>
    </location>
    <ligand>
        <name>ATP</name>
        <dbReference type="ChEBI" id="CHEBI:30616"/>
    </ligand>
</feature>
<feature type="binding site" evidence="15 22">
    <location>
        <begin position="111"/>
        <end position="115"/>
    </location>
    <ligand>
        <name>ATP</name>
        <dbReference type="ChEBI" id="CHEBI:30616"/>
    </ligand>
</feature>
<feature type="binding site" evidence="15 22">
    <location>
        <position position="440"/>
    </location>
    <ligand>
        <name>ATP</name>
        <dbReference type="ChEBI" id="CHEBI:30616"/>
    </ligand>
</feature>
<feature type="binding site" evidence="15 22">
    <location>
        <position position="520"/>
    </location>
    <ligand>
        <name>ATP</name>
        <dbReference type="ChEBI" id="CHEBI:30616"/>
    </ligand>
</feature>
<feature type="modified residue" description="N6-succinyllysine" evidence="1">
    <location>
        <position position="31"/>
    </location>
</feature>
<feature type="modified residue" description="Phosphoserine" evidence="29">
    <location>
        <position position="67"/>
    </location>
</feature>
<feature type="modified residue" description="Phosphoserine" evidence="23 24 26 27 28">
    <location>
        <position position="70"/>
    </location>
</feature>
<feature type="modified residue" description="N6-acetyllysine" evidence="1">
    <location>
        <position position="75"/>
    </location>
</feature>
<feature type="modified residue" description="N6-acetyllysine; alternate" evidence="25">
    <location>
        <position position="82"/>
    </location>
</feature>
<feature type="modified residue" description="N6-succinyllysine; alternate" evidence="1">
    <location>
        <position position="82"/>
    </location>
</feature>
<feature type="modified residue" description="N6-acetyllysine" evidence="1">
    <location>
        <position position="87"/>
    </location>
</feature>
<feature type="modified residue" description="Phosphotyrosine" evidence="29">
    <location>
        <position position="90"/>
    </location>
</feature>
<feature type="modified residue" description="N6-acetyllysine" evidence="1">
    <location>
        <position position="91"/>
    </location>
</feature>
<feature type="modified residue" description="N6-acetyllysine; alternate" evidence="25">
    <location>
        <position position="125"/>
    </location>
</feature>
<feature type="modified residue" description="N6-succinyllysine; alternate" evidence="1">
    <location>
        <position position="125"/>
    </location>
</feature>
<feature type="modified residue" description="N6-acetyllysine" evidence="25">
    <location>
        <position position="130"/>
    </location>
</feature>
<feature type="modified residue" description="N6-acetyllysine; alternate" evidence="1">
    <location>
        <position position="133"/>
    </location>
</feature>
<feature type="modified residue" description="N6-malonyllysine; alternate" evidence="11">
    <location>
        <position position="133"/>
    </location>
</feature>
<feature type="modified residue" description="N6-succinyllysine; alternate" evidence="1">
    <location>
        <position position="133"/>
    </location>
</feature>
<feature type="modified residue" description="N6-acetyllysine" evidence="1">
    <location>
        <position position="156"/>
    </location>
</feature>
<feature type="modified residue" description="N6-acetyllysine; alternate" evidence="1">
    <location>
        <position position="191"/>
    </location>
</feature>
<feature type="modified residue" description="N6-succinyllysine; alternate" evidence="1">
    <location>
        <position position="191"/>
    </location>
</feature>
<feature type="modified residue" description="N6-acetyllysine; alternate" evidence="25">
    <location>
        <position position="202"/>
    </location>
</feature>
<feature type="modified residue" description="N6-succinyllysine; alternate" evidence="1">
    <location>
        <position position="202"/>
    </location>
</feature>
<feature type="modified residue" description="N6-acetyllysine; alternate" evidence="1">
    <location>
        <position position="205"/>
    </location>
</feature>
<feature type="modified residue" description="N6-succinyllysine; alternate" evidence="1">
    <location>
        <position position="205"/>
    </location>
</feature>
<feature type="modified residue" description="N6-acetyllysine; alternate" evidence="25">
    <location>
        <position position="218"/>
    </location>
</feature>
<feature type="modified residue" description="N6-succinyllysine; alternate" evidence="1">
    <location>
        <position position="218"/>
    </location>
</feature>
<feature type="modified residue" description="N6-acetyllysine; alternate" evidence="1">
    <location>
        <position position="236"/>
    </location>
</feature>
<feature type="modified residue" description="N6-succinyllysine; alternate" evidence="1">
    <location>
        <position position="236"/>
    </location>
</feature>
<feature type="modified residue" description="N6-acetyllysine" evidence="1">
    <location>
        <position position="249"/>
    </location>
</feature>
<feature type="modified residue" description="N6-acetyllysine; alternate" evidence="1">
    <location>
        <position position="250"/>
    </location>
</feature>
<feature type="modified residue" description="N6-succinyllysine; alternate" evidence="1">
    <location>
        <position position="250"/>
    </location>
</feature>
<feature type="modified residue" description="N6-acetyllysine" evidence="25">
    <location>
        <position position="269"/>
    </location>
</feature>
<feature type="modified residue" description="N6-acetyllysine" evidence="1">
    <location>
        <position position="292"/>
    </location>
</feature>
<feature type="modified residue" description="N6-succinyllysine" evidence="1">
    <location>
        <position position="301"/>
    </location>
</feature>
<feature type="modified residue" description="N6-acetyllysine" evidence="1">
    <location>
        <position position="314"/>
    </location>
</feature>
<feature type="modified residue" description="N6-acetyllysine; alternate" evidence="25">
    <location>
        <position position="352"/>
    </location>
</feature>
<feature type="modified residue" description="N6-succinyllysine; alternate" evidence="1">
    <location>
        <position position="352"/>
    </location>
</feature>
<feature type="modified residue" description="N6-acetyllysine" evidence="25">
    <location>
        <position position="359"/>
    </location>
</feature>
<feature type="modified residue" description="N6-acetyllysine" evidence="1">
    <location>
        <position position="389"/>
    </location>
</feature>
<feature type="modified residue" description="N6-acetyllysine; alternate" evidence="25">
    <location>
        <position position="396"/>
    </location>
</feature>
<feature type="modified residue" description="N6-succinyllysine; alternate" evidence="1">
    <location>
        <position position="396"/>
    </location>
</feature>
<feature type="modified residue" description="Phosphoserine" evidence="1">
    <location>
        <position position="410"/>
    </location>
</feature>
<feature type="modified residue" description="N6-acetyllysine" evidence="25">
    <location>
        <position position="469"/>
    </location>
</feature>
<feature type="modified residue" description="N6-acetyllysine; alternate" evidence="1">
    <location>
        <position position="481"/>
    </location>
</feature>
<feature type="modified residue" description="N6-succinyllysine; alternate" evidence="1">
    <location>
        <position position="481"/>
    </location>
</feature>
<feature type="modified residue" description="Phosphoserine" evidence="28">
    <location>
        <position position="488"/>
    </location>
</feature>
<feature type="cross-link" description="Glycyl lysine isopeptide (Lys-Gly) (interchain with G-Cter in SUMO2)" evidence="30">
    <location>
        <position position="551"/>
    </location>
</feature>
<feature type="splice variant" id="VSP_056144" description="In isoform 2." evidence="19">
    <original>VMLAVDAVIAELKKQ</original>
    <variation>RNVCCHHSVLNFSVL</variation>
    <location>
        <begin position="144"/>
        <end position="158"/>
    </location>
</feature>
<feature type="splice variant" id="VSP_056145" description="In isoform 2." evidence="19">
    <location>
        <begin position="159"/>
        <end position="573"/>
    </location>
</feature>
<feature type="sequence variant" id="VAR_054785" description="In HLD4; transfection with the mutant protein impairs cell growth that worsens with increasing temperature; dbSNP:rs72466451." evidence="9">
    <original>D</original>
    <variation>G</variation>
    <location>
        <position position="29"/>
    </location>
</feature>
<feature type="sequence variant" id="VAR_026748" description="In SPG13; dbSNP:rs66468541." evidence="3">
    <original>V</original>
    <variation>I</variation>
    <location>
        <position position="98"/>
    </location>
</feature>
<feature type="sequence conflict" description="In Ref. 2; AAA36022." evidence="20" ref="2">
    <original>S</original>
    <variation>G</variation>
    <location>
        <position position="67"/>
    </location>
</feature>
<feature type="sequence conflict" description="In Ref. 5; BAG35173." evidence="20" ref="5">
    <original>D</original>
    <variation>N</variation>
    <location>
        <position position="111"/>
    </location>
</feature>
<feature type="sequence conflict" description="In Ref. 5; BAG35173." evidence="20" ref="5">
    <original>N</original>
    <variation>S</variation>
    <location>
        <position position="177"/>
    </location>
</feature>
<feature type="sequence conflict" description="In Ref. 4; ABB01006." evidence="20" ref="4">
    <original>K</original>
    <variation>KAS</variation>
    <location>
        <position position="202"/>
    </location>
</feature>
<feature type="sequence conflict" description="In Ref. 5; BAG35173." evidence="20" ref="5">
    <original>A</original>
    <variation>T</variation>
    <location>
        <position position="260"/>
    </location>
</feature>
<feature type="strand" evidence="34">
    <location>
        <begin position="28"/>
        <end position="32"/>
    </location>
</feature>
<feature type="helix" evidence="34">
    <location>
        <begin position="34"/>
        <end position="52"/>
    </location>
</feature>
<feature type="strand" evidence="33">
    <location>
        <begin position="56"/>
        <end position="58"/>
    </location>
</feature>
<feature type="strand" evidence="34">
    <location>
        <begin position="61"/>
        <end position="64"/>
    </location>
</feature>
<feature type="strand" evidence="34">
    <location>
        <begin position="67"/>
        <end position="70"/>
    </location>
</feature>
<feature type="strand" evidence="34">
    <location>
        <begin position="72"/>
        <end position="74"/>
    </location>
</feature>
<feature type="helix" evidence="34">
    <location>
        <begin position="77"/>
        <end position="82"/>
    </location>
</feature>
<feature type="helix" evidence="34">
    <location>
        <begin position="89"/>
        <end position="108"/>
    </location>
</feature>
<feature type="strand" evidence="33">
    <location>
        <begin position="109"/>
        <end position="111"/>
    </location>
</feature>
<feature type="helix" evidence="34">
    <location>
        <begin position="113"/>
        <end position="128"/>
    </location>
</feature>
<feature type="turn" evidence="33">
    <location>
        <begin position="132"/>
        <end position="134"/>
    </location>
</feature>
<feature type="helix" evidence="34">
    <location>
        <begin position="137"/>
        <end position="158"/>
    </location>
</feature>
<feature type="helix" evidence="34">
    <location>
        <begin position="165"/>
        <end position="175"/>
    </location>
</feature>
<feature type="turn" evidence="31">
    <location>
        <begin position="176"/>
        <end position="178"/>
    </location>
</feature>
<feature type="helix" evidence="34">
    <location>
        <begin position="180"/>
        <end position="193"/>
    </location>
</feature>
<feature type="strand" evidence="34">
    <location>
        <begin position="197"/>
        <end position="203"/>
    </location>
</feature>
<feature type="strand" evidence="34">
    <location>
        <begin position="205"/>
        <end position="208"/>
    </location>
</feature>
<feature type="strand" evidence="34">
    <location>
        <begin position="210"/>
        <end position="214"/>
    </location>
</feature>
<feature type="strand" evidence="35">
    <location>
        <begin position="216"/>
        <end position="218"/>
    </location>
</feature>
<feature type="strand" evidence="36">
    <location>
        <begin position="223"/>
        <end position="225"/>
    </location>
</feature>
<feature type="helix" evidence="34">
    <location>
        <begin position="226"/>
        <end position="228"/>
    </location>
</feature>
<feature type="strand" evidence="34">
    <location>
        <begin position="232"/>
        <end position="235"/>
    </location>
</feature>
<feature type="strand" evidence="34">
    <location>
        <begin position="237"/>
        <end position="249"/>
    </location>
</feature>
<feature type="helix" evidence="34">
    <location>
        <begin position="254"/>
        <end position="266"/>
    </location>
</feature>
<feature type="strand" evidence="34">
    <location>
        <begin position="271"/>
        <end position="276"/>
    </location>
</feature>
<feature type="helix" evidence="34">
    <location>
        <begin position="280"/>
        <end position="293"/>
    </location>
</feature>
<feature type="strand" evidence="34">
    <location>
        <begin position="297"/>
        <end position="301"/>
    </location>
</feature>
<feature type="strand" evidence="34">
    <location>
        <begin position="303"/>
        <end position="305"/>
    </location>
</feature>
<feature type="helix" evidence="34">
    <location>
        <begin position="306"/>
        <end position="320"/>
    </location>
</feature>
<feature type="strand" evidence="35">
    <location>
        <begin position="324"/>
        <end position="326"/>
    </location>
</feature>
<feature type="turn" evidence="32">
    <location>
        <begin position="328"/>
        <end position="330"/>
    </location>
</feature>
<feature type="helix" evidence="35">
    <location>
        <begin position="334"/>
        <end position="336"/>
    </location>
</feature>
<feature type="helix" evidence="34">
    <location>
        <begin position="339"/>
        <end position="341"/>
    </location>
</feature>
<feature type="strand" evidence="34">
    <location>
        <begin position="342"/>
        <end position="350"/>
    </location>
</feature>
<feature type="strand" evidence="34">
    <location>
        <begin position="355"/>
        <end position="357"/>
    </location>
</feature>
<feature type="helix" evidence="34">
    <location>
        <begin position="364"/>
        <end position="380"/>
    </location>
</feature>
<feature type="helix" evidence="34">
    <location>
        <begin position="384"/>
        <end position="398"/>
    </location>
</feature>
<feature type="strand" evidence="34">
    <location>
        <begin position="401"/>
        <end position="406"/>
    </location>
</feature>
<feature type="helix" evidence="34">
    <location>
        <begin position="411"/>
        <end position="433"/>
    </location>
</feature>
<feature type="strand" evidence="34">
    <location>
        <begin position="436"/>
        <end position="438"/>
    </location>
</feature>
<feature type="turn" evidence="34">
    <location>
        <begin position="439"/>
        <end position="441"/>
    </location>
</feature>
<feature type="helix" evidence="34">
    <location>
        <begin position="442"/>
        <end position="445"/>
    </location>
</feature>
<feature type="helix" evidence="34">
    <location>
        <begin position="446"/>
        <end position="453"/>
    </location>
</feature>
<feature type="helix" evidence="34">
    <location>
        <begin position="459"/>
        <end position="471"/>
    </location>
</feature>
<feature type="helix" evidence="34">
    <location>
        <begin position="474"/>
        <end position="482"/>
    </location>
</feature>
<feature type="helix" evidence="34">
    <location>
        <begin position="487"/>
        <end position="495"/>
    </location>
</feature>
<feature type="strand" evidence="34">
    <location>
        <begin position="501"/>
        <end position="504"/>
    </location>
</feature>
<feature type="turn" evidence="34">
    <location>
        <begin position="505"/>
        <end position="508"/>
    </location>
</feature>
<feature type="strand" evidence="34">
    <location>
        <begin position="509"/>
        <end position="512"/>
    </location>
</feature>
<feature type="helix" evidence="34">
    <location>
        <begin position="513"/>
        <end position="516"/>
    </location>
</feature>
<feature type="strand" evidence="34">
    <location>
        <begin position="519"/>
        <end position="521"/>
    </location>
</feature>
<feature type="helix" evidence="34">
    <location>
        <begin position="522"/>
        <end position="539"/>
    </location>
</feature>
<feature type="strand" evidence="34">
    <location>
        <begin position="542"/>
        <end position="548"/>
    </location>
</feature>